<keyword id="KW-0002">3D-structure</keyword>
<keyword id="KW-0007">Acetylation</keyword>
<keyword id="KW-0010">Activator</keyword>
<keyword id="KW-0013">ADP-ribosylation</keyword>
<keyword id="KW-0025">Alternative splicing</keyword>
<keyword id="KW-0067">ATP-binding</keyword>
<keyword id="KW-0158">Chromosome</keyword>
<keyword id="KW-0963">Cytoplasm</keyword>
<keyword id="KW-0903">Direct protein sequencing</keyword>
<keyword id="KW-0227">DNA damage</keyword>
<keyword id="KW-0233">DNA recombination</keyword>
<keyword id="KW-0234">DNA repair</keyword>
<keyword id="KW-0238">DNA-binding</keyword>
<keyword id="KW-0347">Helicase</keyword>
<keyword id="KW-0945">Host-virus interaction</keyword>
<keyword id="KW-0378">Hydrolase</keyword>
<keyword id="KW-0391">Immunity</keyword>
<keyword id="KW-0399">Innate immunity</keyword>
<keyword id="KW-1017">Isopeptide bond</keyword>
<keyword id="KW-0456">Lyase</keyword>
<keyword id="KW-0488">Methylation</keyword>
<keyword id="KW-0511">Multifunctional enzyme</keyword>
<keyword id="KW-0547">Nucleotide-binding</keyword>
<keyword id="KW-0539">Nucleus</keyword>
<keyword id="KW-0597">Phosphoprotein</keyword>
<keyword id="KW-1267">Proteomics identification</keyword>
<keyword id="KW-1185">Reference proteome</keyword>
<keyword id="KW-0772">Systemic lupus erythematosus</keyword>
<keyword id="KW-0804">Transcription</keyword>
<keyword id="KW-0805">Transcription regulation</keyword>
<keyword id="KW-0832">Ubl conjugation</keyword>
<sequence length="609" mass="69843">MSGWESYYKTEGDEEAEEEQEENLEASGDYKYSGRDSLIFLVDASKAMFESQSEDELTPFDMSIQCIQSVYISKIISSDRDLLAVVFYGTEKDKNSVNFKNIYVLQELDNPGAKRILELDQFKGQQGQKRFQDMMGHGSDYSLSEVLWVCANLFSDVQFKMSHKRIMLFTNEDNPHGNDSAKASRARTKAGDLRDTGIFLDLMHLKKPGGFDISLFYRDIISIAEDEDLRVHFEESSKLEDLLRKVRAKETRKRALSRLKLKLNKDIVISVGIYNLVQKALKPPPIKLYRETNEPVKTKTRTFNTSTGGLLLPSDTKRSQIYGSRQIILEKEETEELKRFDDPGLMLMGFKPLVLLKKHHYLRPSLFVYPEESLVIGSSTLFSALLIKCLEKEVAALCRYTPRRNIPPYFVALVPQEEELDDQKIQVTPPGFQLVFLPFADDKRKMPFTEKIMATPEQVGKMKAIVEKLRFTYRSDSFENPVLQQHFRNLEALALDLMEPEQAVDLTLPKVEAMNKRLGSLVDEFKELVYPPDYNPEGKVTKRKHDNEGSGSKRPKVEYSEEELKTHISKGTLGKFTVPMLKEACRAYGLKSGLKKQELLEALTKHFQD</sequence>
<organism>
    <name type="scientific">Homo sapiens</name>
    <name type="common">Human</name>
    <dbReference type="NCBI Taxonomy" id="9606"/>
    <lineage>
        <taxon>Eukaryota</taxon>
        <taxon>Metazoa</taxon>
        <taxon>Chordata</taxon>
        <taxon>Craniata</taxon>
        <taxon>Vertebrata</taxon>
        <taxon>Euteleostomi</taxon>
        <taxon>Mammalia</taxon>
        <taxon>Eutheria</taxon>
        <taxon>Euarchontoglires</taxon>
        <taxon>Primates</taxon>
        <taxon>Haplorrhini</taxon>
        <taxon>Catarrhini</taxon>
        <taxon>Hominidae</taxon>
        <taxon>Homo</taxon>
    </lineage>
</organism>
<evidence type="ECO:0000250" key="1">
    <source>
        <dbReference type="UniProtKB" id="P23475"/>
    </source>
</evidence>
<evidence type="ECO:0000255" key="2">
    <source>
        <dbReference type="PROSITE-ProRule" id="PRU00186"/>
    </source>
</evidence>
<evidence type="ECO:0000256" key="3">
    <source>
        <dbReference type="SAM" id="MobiDB-lite"/>
    </source>
</evidence>
<evidence type="ECO:0000269" key="4">
    <source>
    </source>
</evidence>
<evidence type="ECO:0000269" key="5">
    <source>
    </source>
</evidence>
<evidence type="ECO:0000269" key="6">
    <source>
    </source>
</evidence>
<evidence type="ECO:0000269" key="7">
    <source>
    </source>
</evidence>
<evidence type="ECO:0000269" key="8">
    <source>
    </source>
</evidence>
<evidence type="ECO:0000269" key="9">
    <source>
    </source>
</evidence>
<evidence type="ECO:0000269" key="10">
    <source>
    </source>
</evidence>
<evidence type="ECO:0000269" key="11">
    <source>
    </source>
</evidence>
<evidence type="ECO:0000269" key="12">
    <source>
    </source>
</evidence>
<evidence type="ECO:0000269" key="13">
    <source>
    </source>
</evidence>
<evidence type="ECO:0000269" key="14">
    <source>
    </source>
</evidence>
<evidence type="ECO:0000269" key="15">
    <source>
    </source>
</evidence>
<evidence type="ECO:0000269" key="16">
    <source>
    </source>
</evidence>
<evidence type="ECO:0000269" key="17">
    <source>
    </source>
</evidence>
<evidence type="ECO:0000269" key="18">
    <source>
    </source>
</evidence>
<evidence type="ECO:0000269" key="19">
    <source>
    </source>
</evidence>
<evidence type="ECO:0000269" key="20">
    <source>
    </source>
</evidence>
<evidence type="ECO:0000269" key="21">
    <source>
    </source>
</evidence>
<evidence type="ECO:0000269" key="22">
    <source>
    </source>
</evidence>
<evidence type="ECO:0000269" key="23">
    <source>
    </source>
</evidence>
<evidence type="ECO:0000269" key="24">
    <source>
    </source>
</evidence>
<evidence type="ECO:0000269" key="25">
    <source>
    </source>
</evidence>
<evidence type="ECO:0000269" key="26">
    <source>
    </source>
</evidence>
<evidence type="ECO:0000269" key="27">
    <source>
    </source>
</evidence>
<evidence type="ECO:0000269" key="28">
    <source>
    </source>
</evidence>
<evidence type="ECO:0000269" key="29">
    <source>
    </source>
</evidence>
<evidence type="ECO:0000269" key="30">
    <source>
    </source>
</evidence>
<evidence type="ECO:0000269" key="31">
    <source>
    </source>
</evidence>
<evidence type="ECO:0000269" key="32">
    <source>
    </source>
</evidence>
<evidence type="ECO:0000269" key="33">
    <source>
    </source>
</evidence>
<evidence type="ECO:0000269" key="34">
    <source>
    </source>
</evidence>
<evidence type="ECO:0000269" key="35">
    <source>
    </source>
</evidence>
<evidence type="ECO:0000269" key="36">
    <source>
    </source>
</evidence>
<evidence type="ECO:0000269" key="37">
    <source>
    </source>
</evidence>
<evidence type="ECO:0000269" key="38">
    <source>
    </source>
</evidence>
<evidence type="ECO:0000269" key="39">
    <source>
    </source>
</evidence>
<evidence type="ECO:0000269" key="40">
    <source>
    </source>
</evidence>
<evidence type="ECO:0000269" key="41">
    <source>
    </source>
</evidence>
<evidence type="ECO:0000269" key="42">
    <source>
    </source>
</evidence>
<evidence type="ECO:0000303" key="43">
    <source>
    </source>
</evidence>
<evidence type="ECO:0000305" key="44"/>
<evidence type="ECO:0000305" key="45">
    <source>
    </source>
</evidence>
<evidence type="ECO:0007744" key="46">
    <source>
        <dbReference type="PDB" id="7LSY"/>
    </source>
</evidence>
<evidence type="ECO:0007744" key="47">
    <source>
        <dbReference type="PDB" id="7LT3"/>
    </source>
</evidence>
<evidence type="ECO:0007744" key="48">
    <source>
        <dbReference type="PDB" id="7NFC"/>
    </source>
</evidence>
<evidence type="ECO:0007744" key="49">
    <source>
        <dbReference type="PDB" id="7NFE"/>
    </source>
</evidence>
<evidence type="ECO:0007744" key="50">
    <source>
    </source>
</evidence>
<evidence type="ECO:0007744" key="51">
    <source>
    </source>
</evidence>
<evidence type="ECO:0007744" key="52">
    <source>
    </source>
</evidence>
<evidence type="ECO:0007744" key="53">
    <source>
    </source>
</evidence>
<evidence type="ECO:0007744" key="54">
    <source>
    </source>
</evidence>
<evidence type="ECO:0007744" key="55">
    <source>
    </source>
</evidence>
<evidence type="ECO:0007744" key="56">
    <source>
    </source>
</evidence>
<evidence type="ECO:0007744" key="57">
    <source>
    </source>
</evidence>
<evidence type="ECO:0007744" key="58">
    <source>
    </source>
</evidence>
<evidence type="ECO:0007744" key="59">
    <source>
    </source>
</evidence>
<evidence type="ECO:0007829" key="60">
    <source>
        <dbReference type="PDB" id="1JEQ"/>
    </source>
</evidence>
<evidence type="ECO:0007829" key="61">
    <source>
        <dbReference type="PDB" id="1JEY"/>
    </source>
</evidence>
<evidence type="ECO:0007829" key="62">
    <source>
        <dbReference type="PDB" id="7SGL"/>
    </source>
</evidence>
<evidence type="ECO:0007829" key="63">
    <source>
        <dbReference type="PDB" id="7Z87"/>
    </source>
</evidence>
<evidence type="ECO:0007829" key="64">
    <source>
        <dbReference type="PDB" id="7ZT6"/>
    </source>
</evidence>
<evidence type="ECO:0007829" key="65">
    <source>
        <dbReference type="PDB" id="7ZWA"/>
    </source>
</evidence>
<evidence type="ECO:0007829" key="66">
    <source>
        <dbReference type="PDB" id="7ZYG"/>
    </source>
</evidence>
<evidence type="ECO:0007829" key="67">
    <source>
        <dbReference type="PDB" id="8AG4"/>
    </source>
</evidence>
<gene>
    <name type="primary">XRCC6</name>
    <name type="synonym">G22P1</name>
</gene>
<comment type="function">
    <text evidence="6 7 10 12 13 14 22 31 38 40 42">Single-stranded DNA-dependent ATP-dependent helicase that plays a key role in DNA non-homologous end joining (NHEJ) by recruiting DNA-PK to DNA (PubMed:11493912, PubMed:12145306, PubMed:20493174, PubMed:2466842, PubMed:7957065, PubMed:8621488, PubMed:9742108). Required for double-strand break repair and V(D)J recombination (PubMed:11493912, PubMed:12145306, PubMed:20493174, PubMed:2466842, PubMed:7957065, PubMed:8621488, PubMed:9742108). Also has a role in chromosome translocation (PubMed:11493912, PubMed:12145306, PubMed:20493174, PubMed:2466842, PubMed:7957065, PubMed:8621488, PubMed:9742108). Has a role in chromosome translocation (PubMed:11493912, PubMed:12145306, PubMed:20493174, PubMed:2466842, PubMed:7957065, PubMed:8621488, PubMed:9742108). The DNA helicase II complex binds preferentially to fork-like ends of double-stranded DNA in a cell cycle-dependent manner (PubMed:11493912, PubMed:12145306, PubMed:20493174, PubMed:2466842, PubMed:7957065, PubMed:8621488, PubMed:9742108). It works in the 3'-5' direction (PubMed:11493912, PubMed:12145306, PubMed:20493174, PubMed:2466842, PubMed:7957065, PubMed:8621488, PubMed:9742108). During NHEJ, the XRCC5-XRRC6 dimer performs the recognition step: it recognizes and binds to the broken ends of the DNA and protects them from further resection (PubMed:11493912, PubMed:12145306, PubMed:20493174, PubMed:2466842, PubMed:7957065, PubMed:8621488, PubMed:9742108). Binding to DNA may be mediated by XRCC6 (PubMed:11493912, PubMed:12145306, PubMed:20493174, PubMed:2466842, PubMed:7957065, PubMed:8621488, PubMed:9742108). The XRCC5-XRRC6 dimer acts as a regulatory subunit of the DNA-dependent protein kinase complex DNA-PK by increasing the affinity of the catalytic subunit PRKDC to DNA by 100-fold (PubMed:11493912, PubMed:12145306, PubMed:20493174, PubMed:2466842, PubMed:7957065, PubMed:8621488, PubMed:9742108). The XRCC5-XRRC6 dimer is probably involved in stabilizing broken DNA ends and bringing them together (PubMed:11493912, PubMed:12145306, PubMed:20493174, PubMed:2466842, PubMed:7957065, PubMed:8621488, PubMed:9742108). The assembly of the DNA-PK complex to DNA ends is required for the NHEJ ligation step (PubMed:11493912, PubMed:12145306, PubMed:20493174, PubMed:2466842, PubMed:7957065, PubMed:8621488, PubMed:9742108). Probably also acts as a 5'-deoxyribose-5-phosphate lyase (5'-dRP lyase), by catalyzing the beta-elimination of the 5' deoxyribose-5-phosphate at an abasic site near double-strand breaks (PubMed:20383123). 5'-dRP lyase activity allows to 'clean' the termini of abasic sites, a class of nucleotide damage commonly associated with strand breaks, before such broken ends can be joined (PubMed:20383123). The XRCC5-XRRC6 dimer together with APEX1 acts as a negative regulator of transcription (PubMed:8621488). In association with NAA15, the XRCC5-XRRC6 dimer binds to the osteocalcin promoter and activates osteocalcin expression (PubMed:12145306). Plays a role in the regulation of DNA virus-mediated innate immune response by assembling into the HDP-RNP complex, a complex that serves as a platform for IRF3 phosphorylation and subsequent innate immune response activation through the cGAS-STING pathway (PubMed:28712728). Negatively regulates apoptosis by interacting with BAX and sequestering it from the mitochondria (PubMed:15023334). Might have deubiquitination activity, acting on BAX (PubMed:18362350).</text>
</comment>
<comment type="subunit">
    <text evidence="1 5 6 7 8 9 10 11 14 15 16 17 18 19 21 23 24 25 26 27 28 29 30 31 32 33 35 36 37 40 42">Forms a heterodimer with XRCC5/Ku80; heterodimerization stabilizes XRCC5 protein (PubMed:11493912, PubMed:35545041). Component of the core long-range non-homologous end joining (NHEJ) complex (also named DNA-PK complex) composed of PRKDC, LIG4, XRCC4, XRCC6/Ku70, XRCC5/Ku86 and NHEJ1/XLF (PubMed:12509254, PubMed:12547193, PubMed:25670504, PubMed:25941166, PubMed:33854234, PubMed:34352203, PubMed:9742108). Additional component of the NHEJ complex includes PAXX (PubMed:25574025, PubMed:27601299, PubMed:27705800). Following autophosphorylation, PRKDC dissociates from DNA, leading to formation of the short-range NHEJ complex, composed of LIG4, XRCC4, XRCC6/Ku70, XRCC5/Ku86 and NHEJ1/XLF (PubMed:33854234). The XRCC5-XRCC6 dimer also associates with NAA15, and this complex binds to the osteocalcin promoter and activates osteocalcin expression (PubMed:12145306). In addition, XRCC6 interacts with the osteoblast-specific transcription factors MSX2, RUNX2 and DLX5 (PubMed:12145306). Interacts with ELF3 (PubMed:15075319). Interacts with ATP23 (PubMed:10219089). The XRCC5-XRRC6 dimer associates in a DNA-dependent manner with APEX1 (PubMed:8621488). Binds to CDK9 isoform 2 (PubMed:20493174). Identified in a complex with DEAF1 and XRCC5 (PubMed:22442688). Interacts with DEAF1 (via the SAND domain); the interaction is direct and may be inhibited by DNA-binding (PubMed:22442688). Interacts with CLU (By similarity). Interacts with NR4A3; the DNA-dependent protein kinase complex DNA-PK phosphorylates and activates NR4A3 and prevents NR4A3 ubiquitinylation and degradation (PubMed:25852083). Interacts with CYREN isoform 1 (CYREN-1) and isoform 4 (CYREN-2) (via KBM motif) (PubMed:24610814, PubMed:27063109, PubMed:28959974). Interacts (via N-terminus) with HSF1 (via N-terminus); this interaction is direct and prevents XRCC5/XRCC6 heterodimeric binding and non-homologous end joining (NHEJ) repair activities induced by ionizing radiation (IR) (PubMed:26359349). Part of the HDP-RNP complex composed of at least HEXIM1, PRKDC, XRCC5, XRCC6, paraspeckle proteins (SFPQ, NONO, PSPC1, RBM14, and MATR3) and NEAT1 RNA (PubMed:28712728). Interacts with HMBOX1 (PubMed:23685356). Interacts with ATF7 (PubMed:29490055). Interacts with APLF (via KBM motif) (PubMed:23689425, PubMed:27063109). Interacts with WRN (via KBM motif) (PubMed:27063109). The XRCC5-XRCC6 dimer associates with ALKBH2. Interacts with TPRN; TPRN interacts with a number of DNA damage response proteins, is recruited to sites of DNA damage and may play a role in DNA damage repair (PubMed:23213405). When not acetylated, interacts with BAX (PubMed:15023334). Interacts with ERCC6L2 (By similarity).</text>
</comment>
<comment type="subunit">
    <text evidence="34">(Microbial infection) Interacts with human T-cell leukemia virus 1/HTLV-1 protein HBZ.</text>
</comment>
<comment type="interaction">
    <interactant intactId="EBI-353208">
        <id>P12956</id>
    </interactant>
    <interactant intactId="EBI-710003">
        <id>Q96P48</id>
        <label>ARAP1</label>
    </interactant>
    <organismsDiffer>false</organismsDiffer>
    <experiments>2</experiments>
</comment>
<comment type="interaction">
    <interactant intactId="EBI-353208">
        <id>P12956</id>
    </interactant>
    <interactant intactId="EBI-516580">
        <id>Q07812</id>
        <label>BAX</label>
    </interactant>
    <organismsDiffer>false</organismsDiffer>
    <experiments>2</experiments>
</comment>
<comment type="interaction">
    <interactant intactId="EBI-353208">
        <id>P12956</id>
    </interactant>
    <interactant intactId="EBI-945751">
        <id>P38432</id>
        <label>COIL</label>
    </interactant>
    <organismsDiffer>false</organismsDiffer>
    <experiments>3</experiments>
</comment>
<comment type="interaction">
    <interactant intactId="EBI-353208">
        <id>P12956</id>
    </interactant>
    <interactant intactId="EBI-718185">
        <id>O75398</id>
        <label>DEAF1</label>
    </interactant>
    <organismsDiffer>false</organismsDiffer>
    <experiments>7</experiments>
</comment>
<comment type="interaction">
    <interactant intactId="EBI-353208">
        <id>P12956</id>
    </interactant>
    <interactant intactId="EBI-2549423">
        <id>Q6NT76</id>
        <label>HMBOX1</label>
    </interactant>
    <organismsDiffer>false</organismsDiffer>
    <experiments>2</experiments>
</comment>
<comment type="interaction">
    <interactant intactId="EBI-353208">
        <id>P12956</id>
    </interactant>
    <interactant intactId="EBI-466029">
        <id>P42858</id>
        <label>HTT</label>
    </interactant>
    <organismsDiffer>false</organismsDiffer>
    <experiments>21</experiments>
</comment>
<comment type="interaction">
    <interactant intactId="EBI-353208">
        <id>P12956</id>
    </interactant>
    <interactant intactId="EBI-716486">
        <id>Q92597</id>
        <label>NDRG1</label>
    </interactant>
    <organismsDiffer>false</organismsDiffer>
    <experiments>2</experiments>
</comment>
<comment type="interaction">
    <interactant intactId="EBI-353208">
        <id>P12956</id>
    </interactant>
    <interactant intactId="EBI-716596">
        <id>Q08752</id>
        <label>PPID</label>
    </interactant>
    <organismsDiffer>false</organismsDiffer>
    <experiments>4</experiments>
</comment>
<comment type="interaction">
    <interactant intactId="EBI-353208">
        <id>P12956</id>
    </interactant>
    <interactant intactId="EBI-725702">
        <id>O15355</id>
        <label>PPM1G</label>
    </interactant>
    <organismsDiffer>false</organismsDiffer>
    <experiments>4</experiments>
</comment>
<comment type="interaction">
    <interactant intactId="EBI-353208">
        <id>P12956</id>
    </interactant>
    <interactant intactId="EBI-352053">
        <id>P78527</id>
        <label>PRKDC</label>
    </interactant>
    <organismsDiffer>false</organismsDiffer>
    <experiments>8</experiments>
</comment>
<comment type="interaction">
    <interactant intactId="EBI-353208">
        <id>P12956</id>
    </interactant>
    <interactant intactId="EBI-396669">
        <id>Q9Y3C5</id>
        <label>RNF11</label>
    </interactant>
    <organismsDiffer>false</organismsDiffer>
    <experiments>3</experiments>
</comment>
<comment type="interaction">
    <interactant intactId="EBI-353208">
        <id>P12956</id>
    </interactant>
    <interactant intactId="EBI-1802965">
        <id>Q96EB6</id>
        <label>SIRT1</label>
    </interactant>
    <organismsDiffer>false</organismsDiffer>
    <experiments>7</experiments>
</comment>
<comment type="interaction">
    <interactant intactId="EBI-353208">
        <id>P12956</id>
    </interactant>
    <interactant intactId="EBI-533224">
        <id>P15884</id>
        <label>TCF4</label>
    </interactant>
    <organismsDiffer>false</organismsDiffer>
    <experiments>2</experiments>
</comment>
<comment type="interaction">
    <interactant intactId="EBI-353208">
        <id>P12956</id>
    </interactant>
    <interactant intactId="EBI-924724">
        <id>Q9NQB0</id>
        <label>TCF7L2</label>
    </interactant>
    <organismsDiffer>false</organismsDiffer>
    <experiments>10</experiments>
</comment>
<comment type="interaction">
    <interactant intactId="EBI-353208">
        <id>P12956</id>
    </interactant>
    <interactant intactId="EBI-750109">
        <id>Q9NYB0</id>
        <label>TERF2IP</label>
    </interactant>
    <organismsDiffer>false</organismsDiffer>
    <experiments>3</experiments>
</comment>
<comment type="interaction">
    <interactant intactId="EBI-353208">
        <id>P12956</id>
    </interactant>
    <interactant intactId="EBI-366083">
        <id>P04637</id>
        <label>TP53</label>
    </interactant>
    <organismsDiffer>false</organismsDiffer>
    <experiments>2</experiments>
</comment>
<comment type="interaction">
    <interactant intactId="EBI-353208">
        <id>P12956</id>
    </interactant>
    <interactant intactId="EBI-1783169">
        <id>P13693</id>
        <label>TPT1</label>
    </interactant>
    <organismsDiffer>false</organismsDiffer>
    <experiments>8</experiments>
</comment>
<comment type="interaction">
    <interactant intactId="EBI-353208">
        <id>P12956</id>
    </interactant>
    <interactant intactId="EBI-720609">
        <id>O76024</id>
        <label>WFS1</label>
    </interactant>
    <organismsDiffer>false</organismsDiffer>
    <experiments>3</experiments>
</comment>
<comment type="interaction">
    <interactant intactId="EBI-353208">
        <id>P12956</id>
    </interactant>
    <interactant intactId="EBI-368417">
        <id>Q14191</id>
        <label>WRN</label>
    </interactant>
    <organismsDiffer>false</organismsDiffer>
    <experiments>7</experiments>
</comment>
<comment type="interaction">
    <interactant intactId="EBI-353208">
        <id>P12956</id>
    </interactant>
    <interactant intactId="EBI-717592">
        <id>Q13426</id>
        <label>XRCC4</label>
    </interactant>
    <organismsDiffer>false</organismsDiffer>
    <experiments>3</experiments>
</comment>
<comment type="interaction">
    <interactant intactId="EBI-353208">
        <id>P12956</id>
    </interactant>
    <interactant intactId="EBI-357997">
        <id>P13010</id>
        <label>XRCC5</label>
    </interactant>
    <organismsDiffer>false</organismsDiffer>
    <experiments>23</experiments>
</comment>
<comment type="subcellular location">
    <subcellularLocation>
        <location evidence="10 15 37">Nucleus</location>
    </subcellularLocation>
    <subcellularLocation>
        <location evidence="15">Chromosome</location>
    </subcellularLocation>
    <subcellularLocation>
        <location evidence="10 37">Cytoplasm</location>
    </subcellularLocation>
    <text evidence="37">When trimethylated, localizes in the cytoplasm.</text>
</comment>
<comment type="alternative products">
    <event type="alternative splicing"/>
    <isoform>
        <id>P12956-1</id>
        <name>1</name>
        <sequence type="displayed"/>
    </isoform>
    <isoform>
        <id>P12956-2</id>
        <name>2</name>
        <sequence type="described" ref="VSP_056030"/>
    </isoform>
</comment>
<comment type="developmental stage">
    <text evidence="39">Expression does not increase during promyelocyte differentiation.</text>
</comment>
<comment type="induction">
    <text>In osteoblasts, by FGF2.</text>
</comment>
<comment type="PTM">
    <text evidence="4 9 41">Phosphorylation by PRKDC may enhance helicase activity. Phosphorylation of Ser-51 does not affect DNA repair.</text>
</comment>
<comment type="PTM">
    <text evidence="20">ADP-ribosylated by PARP3.</text>
</comment>
<comment type="PTM">
    <text evidence="37">Methylation by SETD4 leads to accumulation in the cytoplasm and is a prerequisite for acetylation, possibly due to the change of subcellular from the nucleus to the cytosol initiated by methylation, acetylation occurring in the cytosol.</text>
</comment>
<comment type="PTM">
    <text evidence="10">Acetylation can be catalyzed in vitro by CREBBP/CBP and KAT2B/PCAF.</text>
</comment>
<comment type="miscellaneous">
    <text>Individuals with systemic lupus erythematosus (SLE) and related disorders produce extremely large amounts of autoantibodies to XRCC5 and XRCC6. Existence of a major autoantigenic epitope or epitopes on the C-terminal 190 amino acids of XRCC6 containing the leucine repeat. The majority of autoantibodies to XRCC6 in most sera from patients with SLE seem to be reactive with this region.</text>
</comment>
<comment type="similarity">
    <text evidence="44">Belongs to the ku70 family.</text>
</comment>
<comment type="online information" name="Atlas of Genetics and Cytogenetics in Oncology and Haematology">
    <link uri="https://atlasgeneticsoncology.org/gene/246/XRCC6"/>
</comment>
<reference key="1">
    <citation type="journal article" date="1989" name="J. Biol. Chem.">
        <title>Cloning and characterization of a cDNA that encodes a 70-kDa novel human thyroid autoantigen.</title>
        <authorList>
            <person name="Chan J.Y."/>
            <person name="Lerman M.I."/>
            <person name="Prabhakar B.S."/>
            <person name="Isozaki O."/>
            <person name="Santisteban P."/>
            <person name="Kuppers R.C."/>
            <person name="Oates E.L."/>
            <person name="Notkins A.L."/>
            <person name="Kohn L.D."/>
        </authorList>
    </citation>
    <scope>NUCLEOTIDE SEQUENCE [MRNA] (ISOFORM 1)</scope>
</reference>
<reference key="2">
    <citation type="journal article" date="1989" name="J. Biol. Chem.">
        <title>Molecular cloning of cDNA encoding the p70 (Ku) lupus autoantigen.</title>
        <authorList>
            <person name="Reeves W.H."/>
            <person name="Sthoeger Z.M."/>
        </authorList>
    </citation>
    <scope>NUCLEOTIDE SEQUENCE [MRNA] (ISOFORM 1)</scope>
    <scope>PARTIAL PROTEIN SEQUENCE</scope>
    <scope>ROLE IN LUPUS ERYTHEMATOSUS</scope>
</reference>
<reference key="3">
    <citation type="journal article" date="1992" name="Mol. Biol. Rep.">
        <title>Nucleotide sequence and genomic structure analyses of the p70 subunit of the human Ku autoantigen: evidence for a family of genes encoding Ku (p70)-related polypeptides.</title>
        <authorList>
            <person name="Griffith A.J."/>
            <person name="Craft J."/>
            <person name="Evans J."/>
            <person name="Mimori T."/>
            <person name="Hardin J.A."/>
        </authorList>
    </citation>
    <scope>NUCLEOTIDE SEQUENCE [MRNA] (ISOFORM 1)</scope>
</reference>
<reference key="4">
    <citation type="journal article" date="2004" name="Nat. Genet.">
        <title>Complete sequencing and characterization of 21,243 full-length human cDNAs.</title>
        <authorList>
            <person name="Ota T."/>
            <person name="Suzuki Y."/>
            <person name="Nishikawa T."/>
            <person name="Otsuki T."/>
            <person name="Sugiyama T."/>
            <person name="Irie R."/>
            <person name="Wakamatsu A."/>
            <person name="Hayashi K."/>
            <person name="Sato H."/>
            <person name="Nagai K."/>
            <person name="Kimura K."/>
            <person name="Makita H."/>
            <person name="Sekine M."/>
            <person name="Obayashi M."/>
            <person name="Nishi T."/>
            <person name="Shibahara T."/>
            <person name="Tanaka T."/>
            <person name="Ishii S."/>
            <person name="Yamamoto J."/>
            <person name="Saito K."/>
            <person name="Kawai Y."/>
            <person name="Isono Y."/>
            <person name="Nakamura Y."/>
            <person name="Nagahari K."/>
            <person name="Murakami K."/>
            <person name="Yasuda T."/>
            <person name="Iwayanagi T."/>
            <person name="Wagatsuma M."/>
            <person name="Shiratori A."/>
            <person name="Sudo H."/>
            <person name="Hosoiri T."/>
            <person name="Kaku Y."/>
            <person name="Kodaira H."/>
            <person name="Kondo H."/>
            <person name="Sugawara M."/>
            <person name="Takahashi M."/>
            <person name="Kanda K."/>
            <person name="Yokoi T."/>
            <person name="Furuya T."/>
            <person name="Kikkawa E."/>
            <person name="Omura Y."/>
            <person name="Abe K."/>
            <person name="Kamihara K."/>
            <person name="Katsuta N."/>
            <person name="Sato K."/>
            <person name="Tanikawa M."/>
            <person name="Yamazaki M."/>
            <person name="Ninomiya K."/>
            <person name="Ishibashi T."/>
            <person name="Yamashita H."/>
            <person name="Murakawa K."/>
            <person name="Fujimori K."/>
            <person name="Tanai H."/>
            <person name="Kimata M."/>
            <person name="Watanabe M."/>
            <person name="Hiraoka S."/>
            <person name="Chiba Y."/>
            <person name="Ishida S."/>
            <person name="Ono Y."/>
            <person name="Takiguchi S."/>
            <person name="Watanabe S."/>
            <person name="Yosida M."/>
            <person name="Hotuta T."/>
            <person name="Kusano J."/>
            <person name="Kanehori K."/>
            <person name="Takahashi-Fujii A."/>
            <person name="Hara H."/>
            <person name="Tanase T.-O."/>
            <person name="Nomura Y."/>
            <person name="Togiya S."/>
            <person name="Komai F."/>
            <person name="Hara R."/>
            <person name="Takeuchi K."/>
            <person name="Arita M."/>
            <person name="Imose N."/>
            <person name="Musashino K."/>
            <person name="Yuuki H."/>
            <person name="Oshima A."/>
            <person name="Sasaki N."/>
            <person name="Aotsuka S."/>
            <person name="Yoshikawa Y."/>
            <person name="Matsunawa H."/>
            <person name="Ichihara T."/>
            <person name="Shiohata N."/>
            <person name="Sano S."/>
            <person name="Moriya S."/>
            <person name="Momiyama H."/>
            <person name="Satoh N."/>
            <person name="Takami S."/>
            <person name="Terashima Y."/>
            <person name="Suzuki O."/>
            <person name="Nakagawa S."/>
            <person name="Senoh A."/>
            <person name="Mizoguchi H."/>
            <person name="Goto Y."/>
            <person name="Shimizu F."/>
            <person name="Wakebe H."/>
            <person name="Hishigaki H."/>
            <person name="Watanabe T."/>
            <person name="Sugiyama A."/>
            <person name="Takemoto M."/>
            <person name="Kawakami B."/>
            <person name="Yamazaki M."/>
            <person name="Watanabe K."/>
            <person name="Kumagai A."/>
            <person name="Itakura S."/>
            <person name="Fukuzumi Y."/>
            <person name="Fujimori Y."/>
            <person name="Komiyama M."/>
            <person name="Tashiro H."/>
            <person name="Tanigami A."/>
            <person name="Fujiwara T."/>
            <person name="Ono T."/>
            <person name="Yamada K."/>
            <person name="Fujii Y."/>
            <person name="Ozaki K."/>
            <person name="Hirao M."/>
            <person name="Ohmori Y."/>
            <person name="Kawabata A."/>
            <person name="Hikiji T."/>
            <person name="Kobatake N."/>
            <person name="Inagaki H."/>
            <person name="Ikema Y."/>
            <person name="Okamoto S."/>
            <person name="Okitani R."/>
            <person name="Kawakami T."/>
            <person name="Noguchi S."/>
            <person name="Itoh T."/>
            <person name="Shigeta K."/>
            <person name="Senba T."/>
            <person name="Matsumura K."/>
            <person name="Nakajima Y."/>
            <person name="Mizuno T."/>
            <person name="Morinaga M."/>
            <person name="Sasaki M."/>
            <person name="Togashi T."/>
            <person name="Oyama M."/>
            <person name="Hata H."/>
            <person name="Watanabe M."/>
            <person name="Komatsu T."/>
            <person name="Mizushima-Sugano J."/>
            <person name="Satoh T."/>
            <person name="Shirai Y."/>
            <person name="Takahashi Y."/>
            <person name="Nakagawa K."/>
            <person name="Okumura K."/>
            <person name="Nagase T."/>
            <person name="Nomura N."/>
            <person name="Kikuchi H."/>
            <person name="Masuho Y."/>
            <person name="Yamashita R."/>
            <person name="Nakai K."/>
            <person name="Yada T."/>
            <person name="Nakamura Y."/>
            <person name="Ohara O."/>
            <person name="Isogai T."/>
            <person name="Sugano S."/>
        </authorList>
    </citation>
    <scope>NUCLEOTIDE SEQUENCE [LARGE SCALE MRNA] (ISOFORM 2)</scope>
    <source>
        <tissue>Kidney</tissue>
    </source>
</reference>
<reference key="5">
    <citation type="submission" date="2004-06" db="EMBL/GenBank/DDBJ databases">
        <title>Cloning of human full open reading frames in Gateway(TM) system entry vector (pDONR201).</title>
        <authorList>
            <person name="Halleck A."/>
            <person name="Ebert L."/>
            <person name="Mkoundinya M."/>
            <person name="Schick M."/>
            <person name="Eisenstein S."/>
            <person name="Neubert P."/>
            <person name="Kstrang K."/>
            <person name="Schatten R."/>
            <person name="Shen B."/>
            <person name="Henze S."/>
            <person name="Mar W."/>
            <person name="Korn B."/>
            <person name="Zuo D."/>
            <person name="Hu Y."/>
            <person name="LaBaer J."/>
        </authorList>
    </citation>
    <scope>NUCLEOTIDE SEQUENCE [LARGE SCALE MRNA] (ISOFORM 1)</scope>
</reference>
<reference key="6">
    <citation type="submission" date="2004-12" db="EMBL/GenBank/DDBJ databases">
        <authorList>
            <consortium name="NIEHS SNPs program"/>
        </authorList>
    </citation>
    <scope>NUCLEOTIDE SEQUENCE [GENOMIC DNA]</scope>
</reference>
<reference key="7">
    <citation type="journal article" date="1999" name="Nature">
        <title>The DNA sequence of human chromosome 22.</title>
        <authorList>
            <person name="Dunham I."/>
            <person name="Hunt A.R."/>
            <person name="Collins J.E."/>
            <person name="Bruskiewich R."/>
            <person name="Beare D.M."/>
            <person name="Clamp M."/>
            <person name="Smink L.J."/>
            <person name="Ainscough R."/>
            <person name="Almeida J.P."/>
            <person name="Babbage A.K."/>
            <person name="Bagguley C."/>
            <person name="Bailey J."/>
            <person name="Barlow K.F."/>
            <person name="Bates K.N."/>
            <person name="Beasley O.P."/>
            <person name="Bird C.P."/>
            <person name="Blakey S.E."/>
            <person name="Bridgeman A.M."/>
            <person name="Buck D."/>
            <person name="Burgess J."/>
            <person name="Burrill W.D."/>
            <person name="Burton J."/>
            <person name="Carder C."/>
            <person name="Carter N.P."/>
            <person name="Chen Y."/>
            <person name="Clark G."/>
            <person name="Clegg S.M."/>
            <person name="Cobley V.E."/>
            <person name="Cole C.G."/>
            <person name="Collier R.E."/>
            <person name="Connor R."/>
            <person name="Conroy D."/>
            <person name="Corby N.R."/>
            <person name="Coville G.J."/>
            <person name="Cox A.V."/>
            <person name="Davis J."/>
            <person name="Dawson E."/>
            <person name="Dhami P.D."/>
            <person name="Dockree C."/>
            <person name="Dodsworth S.J."/>
            <person name="Durbin R.M."/>
            <person name="Ellington A.G."/>
            <person name="Evans K.L."/>
            <person name="Fey J.M."/>
            <person name="Fleming K."/>
            <person name="French L."/>
            <person name="Garner A.A."/>
            <person name="Gilbert J.G.R."/>
            <person name="Goward M.E."/>
            <person name="Grafham D.V."/>
            <person name="Griffiths M.N.D."/>
            <person name="Hall C."/>
            <person name="Hall R.E."/>
            <person name="Hall-Tamlyn G."/>
            <person name="Heathcott R.W."/>
            <person name="Ho S."/>
            <person name="Holmes S."/>
            <person name="Hunt S.E."/>
            <person name="Jones M.C."/>
            <person name="Kershaw J."/>
            <person name="Kimberley A.M."/>
            <person name="King A."/>
            <person name="Laird G.K."/>
            <person name="Langford C.F."/>
            <person name="Leversha M.A."/>
            <person name="Lloyd C."/>
            <person name="Lloyd D.M."/>
            <person name="Martyn I.D."/>
            <person name="Mashreghi-Mohammadi M."/>
            <person name="Matthews L.H."/>
            <person name="Mccann O.T."/>
            <person name="Mcclay J."/>
            <person name="Mclaren S."/>
            <person name="McMurray A.A."/>
            <person name="Milne S.A."/>
            <person name="Mortimore B.J."/>
            <person name="Odell C.N."/>
            <person name="Pavitt R."/>
            <person name="Pearce A.V."/>
            <person name="Pearson D."/>
            <person name="Phillimore B.J.C.T."/>
            <person name="Phillips S.H."/>
            <person name="Plumb R.W."/>
            <person name="Ramsay H."/>
            <person name="Ramsey Y."/>
            <person name="Rogers L."/>
            <person name="Ross M.T."/>
            <person name="Scott C.E."/>
            <person name="Sehra H.K."/>
            <person name="Skuce C.D."/>
            <person name="Smalley S."/>
            <person name="Smith M.L."/>
            <person name="Soderlund C."/>
            <person name="Spragon L."/>
            <person name="Steward C.A."/>
            <person name="Sulston J.E."/>
            <person name="Swann R.M."/>
            <person name="Vaudin M."/>
            <person name="Wall M."/>
            <person name="Wallis J.M."/>
            <person name="Whiteley M.N."/>
            <person name="Willey D.L."/>
            <person name="Williams L."/>
            <person name="Williams S.A."/>
            <person name="Williamson H."/>
            <person name="Wilmer T.E."/>
            <person name="Wilming L."/>
            <person name="Wright C.L."/>
            <person name="Hubbard T."/>
            <person name="Bentley D.R."/>
            <person name="Beck S."/>
            <person name="Rogers J."/>
            <person name="Shimizu N."/>
            <person name="Minoshima S."/>
            <person name="Kawasaki K."/>
            <person name="Sasaki T."/>
            <person name="Asakawa S."/>
            <person name="Kudoh J."/>
            <person name="Shintani A."/>
            <person name="Shibuya K."/>
            <person name="Yoshizaki Y."/>
            <person name="Aoki N."/>
            <person name="Mitsuyama S."/>
            <person name="Roe B.A."/>
            <person name="Chen F."/>
            <person name="Chu L."/>
            <person name="Crabtree J."/>
            <person name="Deschamps S."/>
            <person name="Do A."/>
            <person name="Do T."/>
            <person name="Dorman A."/>
            <person name="Fang F."/>
            <person name="Fu Y."/>
            <person name="Hu P."/>
            <person name="Hua A."/>
            <person name="Kenton S."/>
            <person name="Lai H."/>
            <person name="Lao H.I."/>
            <person name="Lewis J."/>
            <person name="Lewis S."/>
            <person name="Lin S.-P."/>
            <person name="Loh P."/>
            <person name="Malaj E."/>
            <person name="Nguyen T."/>
            <person name="Pan H."/>
            <person name="Phan S."/>
            <person name="Qi S."/>
            <person name="Qian Y."/>
            <person name="Ray L."/>
            <person name="Ren Q."/>
            <person name="Shaull S."/>
            <person name="Sloan D."/>
            <person name="Song L."/>
            <person name="Wang Q."/>
            <person name="Wang Y."/>
            <person name="Wang Z."/>
            <person name="White J."/>
            <person name="Willingham D."/>
            <person name="Wu H."/>
            <person name="Yao Z."/>
            <person name="Zhan M."/>
            <person name="Zhang G."/>
            <person name="Chissoe S."/>
            <person name="Murray J."/>
            <person name="Miller N."/>
            <person name="Minx P."/>
            <person name="Fulton R."/>
            <person name="Johnson D."/>
            <person name="Bemis G."/>
            <person name="Bentley D."/>
            <person name="Bradshaw H."/>
            <person name="Bourne S."/>
            <person name="Cordes M."/>
            <person name="Du Z."/>
            <person name="Fulton L."/>
            <person name="Goela D."/>
            <person name="Graves T."/>
            <person name="Hawkins J."/>
            <person name="Hinds K."/>
            <person name="Kemp K."/>
            <person name="Latreille P."/>
            <person name="Layman D."/>
            <person name="Ozersky P."/>
            <person name="Rohlfing T."/>
            <person name="Scheet P."/>
            <person name="Walker C."/>
            <person name="Wamsley A."/>
            <person name="Wohldmann P."/>
            <person name="Pepin K."/>
            <person name="Nelson J."/>
            <person name="Korf I."/>
            <person name="Bedell J.A."/>
            <person name="Hillier L.W."/>
            <person name="Mardis E."/>
            <person name="Waterston R."/>
            <person name="Wilson R."/>
            <person name="Emanuel B.S."/>
            <person name="Shaikh T."/>
            <person name="Kurahashi H."/>
            <person name="Saitta S."/>
            <person name="Budarf M.L."/>
            <person name="McDermid H.E."/>
            <person name="Johnson A."/>
            <person name="Wong A.C.C."/>
            <person name="Morrow B.E."/>
            <person name="Edelmann L."/>
            <person name="Kim U.J."/>
            <person name="Shizuya H."/>
            <person name="Simon M.I."/>
            <person name="Dumanski J.P."/>
            <person name="Peyrard M."/>
            <person name="Kedra D."/>
            <person name="Seroussi E."/>
            <person name="Fransson I."/>
            <person name="Tapia I."/>
            <person name="Bruder C.E."/>
            <person name="O'Brien K.P."/>
            <person name="Wilkinson P."/>
            <person name="Bodenteich A."/>
            <person name="Hartman K."/>
            <person name="Hu X."/>
            <person name="Khan A.S."/>
            <person name="Lane L."/>
            <person name="Tilahun Y."/>
            <person name="Wright H."/>
        </authorList>
    </citation>
    <scope>NUCLEOTIDE SEQUENCE [LARGE SCALE GENOMIC DNA]</scope>
</reference>
<reference key="8">
    <citation type="submission" date="2005-07" db="EMBL/GenBank/DDBJ databases">
        <authorList>
            <person name="Mural R.J."/>
            <person name="Istrail S."/>
            <person name="Sutton G."/>
            <person name="Florea L."/>
            <person name="Halpern A.L."/>
            <person name="Mobarry C.M."/>
            <person name="Lippert R."/>
            <person name="Walenz B."/>
            <person name="Shatkay H."/>
            <person name="Dew I."/>
            <person name="Miller J.R."/>
            <person name="Flanigan M.J."/>
            <person name="Edwards N.J."/>
            <person name="Bolanos R."/>
            <person name="Fasulo D."/>
            <person name="Halldorsson B.V."/>
            <person name="Hannenhalli S."/>
            <person name="Turner R."/>
            <person name="Yooseph S."/>
            <person name="Lu F."/>
            <person name="Nusskern D.R."/>
            <person name="Shue B.C."/>
            <person name="Zheng X.H."/>
            <person name="Zhong F."/>
            <person name="Delcher A.L."/>
            <person name="Huson D.H."/>
            <person name="Kravitz S.A."/>
            <person name="Mouchard L."/>
            <person name="Reinert K."/>
            <person name="Remington K.A."/>
            <person name="Clark A.G."/>
            <person name="Waterman M.S."/>
            <person name="Eichler E.E."/>
            <person name="Adams M.D."/>
            <person name="Hunkapiller M.W."/>
            <person name="Myers E.W."/>
            <person name="Venter J.C."/>
        </authorList>
    </citation>
    <scope>NUCLEOTIDE SEQUENCE [LARGE SCALE GENOMIC DNA]</scope>
</reference>
<reference key="9">
    <citation type="journal article" date="2004" name="Genome Res.">
        <title>The status, quality, and expansion of the NIH full-length cDNA project: the Mammalian Gene Collection (MGC).</title>
        <authorList>
            <consortium name="The MGC Project Team"/>
        </authorList>
    </citation>
    <scope>NUCLEOTIDE SEQUENCE [LARGE SCALE MRNA] (ISOFORM 1)</scope>
    <source>
        <tissue>Brain</tissue>
        <tissue>Kidney</tissue>
        <tissue>Lung</tissue>
        <tissue>Placenta</tissue>
        <tissue>Skin</tissue>
    </source>
</reference>
<reference key="10">
    <citation type="journal article" date="1992" name="J. Biol. Chem.">
        <title>Identification of proteins binding to interferon-inducible transcriptional enhancers in hematopoietic cells.</title>
        <authorList>
            <person name="Wedrychowski A."/>
            <person name="Henzel W."/>
            <person name="Huston L."/>
            <person name="Paslidis N."/>
            <person name="Ellerson D."/>
            <person name="McRae M."/>
            <person name="Seong D."/>
            <person name="Howard O.M.Z."/>
            <person name="Deisseroth A."/>
        </authorList>
    </citation>
    <scope>PROTEIN SEQUENCE OF 10-30 AND 299-317</scope>
</reference>
<reference key="11">
    <citation type="journal article" date="1996" name="FEBS Lett.">
        <title>Non-histone protein 1 (NHP1) is a member of the Ku protein family which is upregulated in differentiating mouse myoblasts and human promyelocytes.</title>
        <authorList>
            <person name="Oderwald H."/>
            <person name="Hughes M.J."/>
            <person name="Jost J.-P."/>
        </authorList>
    </citation>
    <scope>PROTEIN SEQUENCE OF 101-114 AND 116-125</scope>
    <scope>DEVELOPMENTAL STAGE</scope>
    <source>
        <tissue>Cervix carcinoma</tissue>
    </source>
</reference>
<reference key="12">
    <citation type="journal article" date="1996" name="J. Biol. Chem.">
        <title>The interaction between Ku antigen and REF1 protein mediates negative gene regulation by extracellular calcium.</title>
        <authorList>
            <person name="Chung U."/>
            <person name="Igarashi T."/>
            <person name="Nishishita T."/>
            <person name="Iwanari H."/>
            <person name="Iwamatsu A."/>
            <person name="Suwa A."/>
            <person name="Mimori T."/>
            <person name="Hata K."/>
            <person name="Ebisu S."/>
            <person name="Ogata E."/>
            <person name="Fujita T."/>
            <person name="Okazaki T."/>
        </authorList>
    </citation>
    <scope>PROTEIN SEQUENCE OF 288-293 AND 300-312</scope>
    <scope>FUNCTION</scope>
    <scope>INTERACTION WITH APEX1</scope>
</reference>
<reference key="13">
    <citation type="journal article" date="1995" name="EMBO J.">
        <title>Purification of the sequence-specific transcription factor CTCBF, involved in the control of human collagen IV genes: subunits with homology to Ku antigen.</title>
        <authorList>
            <person name="Genersch E."/>
            <person name="Eckerskorn C."/>
            <person name="Lottspeich F."/>
            <person name="Herzog C."/>
            <person name="Kuehn K."/>
            <person name="Poeschl E."/>
        </authorList>
    </citation>
    <scope>PROTEIN SEQUENCE OF 301-308 AND 556-565</scope>
</reference>
<reference key="14">
    <citation type="journal article" date="1994" name="EMBO J.">
        <title>Human DNA helicase II: a novel DNA unwinding enzyme identified as the Ku autoantigen.</title>
        <authorList>
            <person name="Tuteja N."/>
            <person name="Tuteja R."/>
            <person name="Ochem A."/>
            <person name="Taneja P."/>
            <person name="Huang N.W."/>
            <person name="Simoncsits A."/>
            <person name="Susic S."/>
            <person name="Rahman K."/>
            <person name="Marusic L."/>
            <person name="Chen J."/>
            <person name="Zhang J."/>
            <person name="Wang S."/>
            <person name="Pongor S."/>
            <person name="Falaschi A."/>
        </authorList>
    </citation>
    <scope>PROTEIN SEQUENCE OF 346-352</scope>
    <scope>FUNCTION</scope>
</reference>
<reference key="15">
    <citation type="journal article" date="1997" name="EMBO J.">
        <title>Double-strand break repair by Ku70 requires heterodimerization with Ku80 and DNA binding functions.</title>
        <authorList>
            <person name="Jin S."/>
            <person name="Weaver D.T."/>
        </authorList>
    </citation>
    <scope>PHOSPHORYLATION AT SER-51</scope>
</reference>
<reference key="16">
    <citation type="journal article" date="1998" name="Mol. Cell. Biol.">
        <title>Productive and nonproductive complexes of Ku and DNA-dependent protein kinase at DNA termini.</title>
        <authorList>
            <person name="West R.B."/>
            <person name="Yaneva M."/>
            <person name="Lieber M.R."/>
        </authorList>
    </citation>
    <scope>FUNCTION</scope>
    <scope>INTERACTION WITH PRKDC</scope>
</reference>
<reference key="17">
    <citation type="journal article" date="1999" name="Biochemistry">
        <title>DNA-dependent protein kinase phosphorylation sites in Ku 70/80 heterodimer.</title>
        <authorList>
            <person name="Chan D.W."/>
            <person name="Ye R."/>
            <person name="Veillette C.J."/>
            <person name="Lees-Miller S.P."/>
        </authorList>
    </citation>
    <scope>PHOSPHORYLATION AT SER-6</scope>
</reference>
<reference key="18">
    <citation type="journal article" date="1999" name="Mutat. Res.">
        <title>Ku, a DNA repair protein with multiple cellular functions?</title>
        <authorList>
            <person name="Featherstone C."/>
            <person name="Jackson S.P."/>
        </authorList>
    </citation>
    <scope>REVIEW</scope>
</reference>
<reference key="19">
    <citation type="journal article" date="1999" name="Nucleic Acids Res.">
        <title>Isolation of Ku70-binding proteins (KUBs).</title>
        <authorList>
            <person name="Yang C.-R."/>
            <person name="Yeh S.-Y."/>
            <person name="Leskov K."/>
            <person name="Odegaard E."/>
            <person name="Hsu H.L."/>
            <person name="Chang C."/>
            <person name="Kinsella T.J."/>
            <person name="Chen D.J."/>
            <person name="Boothman D.A."/>
        </authorList>
    </citation>
    <scope>INTERACTION WITH ATP23</scope>
    <source>
        <tissue>Liver</tissue>
    </source>
</reference>
<reference key="20">
    <citation type="journal article" date="2002" name="DNA Repair">
        <title>Defining interactions between DNA-PK and ligase IV/XRCC4.</title>
        <authorList>
            <person name="Hsu H.-L."/>
            <person name="Yannone S.M."/>
            <person name="Chen D.J."/>
        </authorList>
    </citation>
    <scope>INTERACTION WITH PRKDC</scope>
</reference>
<reference key="21">
    <citation type="journal article" date="2002" name="J. Biol. Chem.">
        <title>Regulation of osteocalcin gene expression by a novel Ku antigen transcription factor complex.</title>
        <authorList>
            <person name="Willis D.M."/>
            <person name="Loewy A.P."/>
            <person name="Charlton-Kachigian N."/>
            <person name="Shao J.-S."/>
            <person name="Ornitz D.M."/>
            <person name="Towler D.A."/>
        </authorList>
    </citation>
    <scope>IDENTIFICATION BY MASS SPECTROMETRY</scope>
    <scope>FUNCTION</scope>
    <scope>INTERACTION WITH NAA15; MSX2; RUNX2 AND DLX5</scope>
    <source>
        <tissue>Heart</tissue>
        <tissue>Osteoblast</tissue>
    </source>
</reference>
<reference key="22">
    <citation type="journal article" date="2003" name="J. Mol. Biol.">
        <title>Coordinated assembly of Ku and p460 subunits of the DNA-dependent protein kinase on DNA ends is necessary for XRCC4-ligase IV recruitment.</title>
        <authorList>
            <person name="Calsou P."/>
            <person name="Delteil C."/>
            <person name="Frit P."/>
            <person name="Drouet J."/>
            <person name="Salles B."/>
        </authorList>
    </citation>
    <scope>IDENTIFICATION IN A COMPLEX WITH XRCC5; PRKDC AND XRCC4</scope>
    <scope>PHOSPHORYLATION</scope>
</reference>
<reference key="23">
    <citation type="journal article" date="2003" name="Nature">
        <title>Proteomic characterization of the human centrosome by protein correlation profiling.</title>
        <authorList>
            <person name="Andersen J.S."/>
            <person name="Wilkinson C.J."/>
            <person name="Mayor T."/>
            <person name="Mortensen P."/>
            <person name="Nigg E.A."/>
            <person name="Mann M."/>
        </authorList>
    </citation>
    <scope>IDENTIFICATION BY MASS SPECTROMETRY</scope>
    <source>
        <tissue>Lymphoblast</tissue>
    </source>
</reference>
<reference key="24">
    <citation type="journal article" date="2004" name="J. Biol. Chem.">
        <title>Positive and negative modulation of the transcriptional activity of the ETS factor ESE-1 through interaction with p300, CREB-binding protein, and Ku 70/86.</title>
        <authorList>
            <person name="Wang H."/>
            <person name="Fang R."/>
            <person name="Cho J.-Y."/>
            <person name="Libermann T.A."/>
            <person name="Oettgen P."/>
        </authorList>
    </citation>
    <scope>INTERACTION WITH ELF3</scope>
</reference>
<reference key="25">
    <citation type="journal article" date="2008" name="Proc. Natl. Acad. Sci. U.S.A.">
        <title>A quantitative atlas of mitotic phosphorylation.</title>
        <authorList>
            <person name="Dephoure N."/>
            <person name="Zhou C."/>
            <person name="Villen J."/>
            <person name="Beausoleil S.A."/>
            <person name="Bakalarski C.E."/>
            <person name="Elledge S.J."/>
            <person name="Gygi S.P."/>
        </authorList>
    </citation>
    <scope>PHOSPHORYLATION [LARGE SCALE ANALYSIS] AT SER-477</scope>
    <scope>IDENTIFICATION BY MASS SPECTROMETRY [LARGE SCALE ANALYSIS]</scope>
    <source>
        <tissue>Cervix carcinoma</tissue>
    </source>
</reference>
<reference key="26">
    <citation type="journal article" date="2009" name="Anal. Chem.">
        <title>Lys-N and trypsin cover complementary parts of the phosphoproteome in a refined SCX-based approach.</title>
        <authorList>
            <person name="Gauci S."/>
            <person name="Helbig A.O."/>
            <person name="Slijper M."/>
            <person name="Krijgsveld J."/>
            <person name="Heck A.J."/>
            <person name="Mohammed S."/>
        </authorList>
    </citation>
    <scope>ACETYLATION [LARGE SCALE ANALYSIS] AT SER-2</scope>
    <scope>CLEAVAGE OF INITIATOR METHIONINE [LARGE SCALE ANALYSIS]</scope>
    <scope>IDENTIFICATION BY MASS SPECTROMETRY [LARGE SCALE ANALYSIS]</scope>
</reference>
<reference key="27">
    <citation type="journal article" date="2009" name="Sci. Signal.">
        <title>Quantitative phosphoproteomic analysis of T cell receptor signaling reveals system-wide modulation of protein-protein interactions.</title>
        <authorList>
            <person name="Mayya V."/>
            <person name="Lundgren D.H."/>
            <person name="Hwang S.-I."/>
            <person name="Rezaul K."/>
            <person name="Wu L."/>
            <person name="Eng J.K."/>
            <person name="Rodionov V."/>
            <person name="Han D.K."/>
        </authorList>
    </citation>
    <scope>PHOSPHORYLATION [LARGE SCALE ANALYSIS] AT SER-520</scope>
    <scope>IDENTIFICATION BY MASS SPECTROMETRY [LARGE SCALE ANALYSIS]</scope>
    <source>
        <tissue>Leukemic T-cell</tissue>
    </source>
</reference>
<reference key="28">
    <citation type="journal article" date="2009" name="Science">
        <title>Lysine acetylation targets protein complexes and co-regulates major cellular functions.</title>
        <authorList>
            <person name="Choudhary C."/>
            <person name="Kumar C."/>
            <person name="Gnad F."/>
            <person name="Nielsen M.L."/>
            <person name="Rehman M."/>
            <person name="Walther T.C."/>
            <person name="Olsen J.V."/>
            <person name="Mann M."/>
        </authorList>
    </citation>
    <scope>ACETYLATION [LARGE SCALE ANALYSIS] AT LYS-31; LYS-331; LYS-338 AND LYS-461</scope>
    <scope>IDENTIFICATION BY MASS SPECTROMETRY [LARGE SCALE ANALYSIS]</scope>
</reference>
<reference key="29">
    <citation type="journal article" date="2010" name="Biochem. Biophys. Res. Commun.">
        <title>55K isoform of CDK9 associates with Ku70 and is involved in DNA repair.</title>
        <authorList>
            <person name="Liu H."/>
            <person name="Herrmann C.H."/>
            <person name="Chiang K."/>
            <person name="Sung T.L."/>
            <person name="Moon S.H."/>
            <person name="Donehower L.A."/>
            <person name="Rice A.P."/>
        </authorList>
    </citation>
    <scope>FUNCTION IN DNA REPAIR</scope>
    <scope>INTERACTION WITH CDK9</scope>
</reference>
<reference key="30">
    <citation type="journal article" date="2013" name="Cell Rep.">
        <title>ABH2 couples regulation of ribosomal DNA transcription with DNA alkylation repair.</title>
        <authorList>
            <person name="Li P."/>
            <person name="Gao S."/>
            <person name="Wang L."/>
            <person name="Yu F."/>
            <person name="Li J."/>
            <person name="Wang C."/>
            <person name="Li J."/>
            <person name="Wong J."/>
        </authorList>
    </citation>
    <scope>INTERACTION WITH ALKBH2</scope>
</reference>
<reference key="31">
    <citation type="journal article" date="2013" name="J. Biol. Chem.">
        <title>Identification and functional characterization of a Ku-binding motif in aprataxin polynucleotide kinase/phosphatase-like factor (APLF).</title>
        <authorList>
            <person name="Shirodkar P."/>
            <person name="Fenton A.L."/>
            <person name="Meng L."/>
            <person name="Koch C.A."/>
        </authorList>
    </citation>
    <scope>INTERACTION WITH APLF</scope>
</reference>
<reference key="32">
    <citation type="journal article" date="2016" name="Nat. Commun.">
        <title>The Ku-binding motif is a conserved module for recruitment and stimulation of non-homologous end-joining proteins.</title>
        <authorList>
            <person name="Grundy G.J."/>
            <person name="Rulten S.L."/>
            <person name="Arribas-Bosacoma R."/>
            <person name="Davidson K."/>
            <person name="Kozik Z."/>
            <person name="Oliver A.W."/>
            <person name="Pearl L.H."/>
            <person name="Caldecott K.W."/>
        </authorList>
    </citation>
    <scope>INTERACTION WITH APLF; WRN AND CYREN</scope>
</reference>
<reference key="33">
    <citation type="journal article" date="2010" name="Nature">
        <title>Ku is a 5'-dRP/AP lyase that excises nucleotide damage near broken ends.</title>
        <authorList>
            <person name="Roberts S.A."/>
            <person name="Strande N."/>
            <person name="Burkhalter M.D."/>
            <person name="Strom C."/>
            <person name="Havener J.M."/>
            <person name="Hasty P."/>
            <person name="Ramsden D.A."/>
        </authorList>
    </citation>
    <scope>FUNCTION AS A 5'-DRP LYASE</scope>
    <scope>MUTAGENESIS OF LYS-31; LYS-160 AND LYS-164</scope>
</reference>
<reference key="34">
    <citation type="journal article" date="2010" name="Sci. Signal.">
        <title>Quantitative phosphoproteomics reveals widespread full phosphorylation site occupancy during mitosis.</title>
        <authorList>
            <person name="Olsen J.V."/>
            <person name="Vermeulen M."/>
            <person name="Santamaria A."/>
            <person name="Kumar C."/>
            <person name="Miller M.L."/>
            <person name="Jensen L.J."/>
            <person name="Gnad F."/>
            <person name="Cox J."/>
            <person name="Jensen T.S."/>
            <person name="Nigg E.A."/>
            <person name="Brunak S."/>
            <person name="Mann M."/>
        </authorList>
    </citation>
    <scope>PHOSPHORYLATION [LARGE SCALE ANALYSIS] AT THR-455 AND SER-550</scope>
    <scope>IDENTIFICATION BY MASS SPECTROMETRY [LARGE SCALE ANALYSIS]</scope>
    <source>
        <tissue>Cervix carcinoma</tissue>
    </source>
</reference>
<reference key="35">
    <citation type="journal article" date="2011" name="BMC Syst. Biol.">
        <title>Initial characterization of the human central proteome.</title>
        <authorList>
            <person name="Burkard T.R."/>
            <person name="Planyavsky M."/>
            <person name="Kaupe I."/>
            <person name="Breitwieser F.P."/>
            <person name="Buerckstuemmer T."/>
            <person name="Bennett K.L."/>
            <person name="Superti-Furga G."/>
            <person name="Colinge J."/>
        </authorList>
    </citation>
    <scope>IDENTIFICATION BY MASS SPECTROMETRY [LARGE SCALE ANALYSIS]</scope>
</reference>
<reference key="36">
    <citation type="journal article" date="2011" name="Sci. Signal.">
        <title>System-wide temporal characterization of the proteome and phosphoproteome of human embryonic stem cell differentiation.</title>
        <authorList>
            <person name="Rigbolt K.T."/>
            <person name="Prokhorova T.A."/>
            <person name="Akimov V."/>
            <person name="Henningsen J."/>
            <person name="Johansen P.T."/>
            <person name="Kratchmarova I."/>
            <person name="Kassem M."/>
            <person name="Mann M."/>
            <person name="Olsen J.V."/>
            <person name="Blagoev B."/>
        </authorList>
    </citation>
    <scope>PHOSPHORYLATION [LARGE SCALE ANALYSIS] AT THR-455</scope>
    <scope>IDENTIFICATION BY MASS SPECTROMETRY [LARGE SCALE ANALYSIS]</scope>
</reference>
<reference key="37">
    <citation type="journal article" date="2012" name="Biol. Open">
        <title>Taperin (c9orf75), a mutated gene in nonsyndromic deafness, encodes a vertebrate specific, nuclear localized protein phosphatase one alpha (PP1alpha) docking protein.</title>
        <authorList>
            <person name="Ferrar T."/>
            <person name="Chamousset D."/>
            <person name="De Wever V."/>
            <person name="Nimick M."/>
            <person name="Andersen J."/>
            <person name="Trinkle-Mulcahy L."/>
            <person name="Moorhead G.B."/>
        </authorList>
    </citation>
    <scope>INTERACTION WITH TPRN</scope>
</reference>
<reference key="38">
    <citation type="journal article" date="2012" name="Mol. Cell. Proteomics">
        <title>Comparative large-scale characterisation of plant vs. mammal proteins reveals similar and idiosyncratic N-alpha acetylation features.</title>
        <authorList>
            <person name="Bienvenut W.V."/>
            <person name="Sumpton D."/>
            <person name="Martinez A."/>
            <person name="Lilla S."/>
            <person name="Espagne C."/>
            <person name="Meinnel T."/>
            <person name="Giglione C."/>
        </authorList>
    </citation>
    <scope>ACETYLATION [LARGE SCALE ANALYSIS] AT SER-2</scope>
    <scope>CLEAVAGE OF INITIATOR METHIONINE [LARGE SCALE ANALYSIS]</scope>
    <scope>IDENTIFICATION BY MASS SPECTROMETRY [LARGE SCALE ANALYSIS]</scope>
</reference>
<reference key="39">
    <citation type="journal article" date="2012" name="PLoS ONE">
        <title>Deformed epidermal autoregulatory factor-1 (DEAF1) interacts with the Ku70 subunit of the DNA-dependent protein kinase complex.</title>
        <authorList>
            <person name="Jensik P.J."/>
            <person name="Huggenvik J.I."/>
            <person name="Collard M.W."/>
        </authorList>
    </citation>
    <scope>DNA-BINDING</scope>
    <scope>IDENTIFICATION IN A COMPLEX WITH DEAF1 AND XRCC5</scope>
    <scope>INTERACTION WITH DEAF1</scope>
    <scope>SUBCELLULAR LOCATION</scope>
    <scope>IDENTIFICATION BY MASS SPECTROMETRY</scope>
</reference>
<reference key="40">
    <citation type="journal article" date="2013" name="EMBO J.">
        <title>HOT1 is a mammalian direct telomere repeat-binding protein contributing to telomerase recruitment.</title>
        <authorList>
            <person name="Kappei D."/>
            <person name="Butter F."/>
            <person name="Benda C."/>
            <person name="Scheibe M."/>
            <person name="Draskovic I."/>
            <person name="Stevense M."/>
            <person name="Novo C.L."/>
            <person name="Basquin C."/>
            <person name="Araki M."/>
            <person name="Araki K."/>
            <person name="Krastev D.B."/>
            <person name="Kittler R."/>
            <person name="Jessberger R."/>
            <person name="Londono-Vallejo J.A."/>
            <person name="Mann M."/>
            <person name="Buchholz F."/>
        </authorList>
    </citation>
    <scope>INTERACTION WITH HMBOX1</scope>
</reference>
<reference key="41">
    <citation type="journal article" date="2013" name="J. Proteome Res.">
        <title>Toward a comprehensive characterization of a human cancer cell phosphoproteome.</title>
        <authorList>
            <person name="Zhou H."/>
            <person name="Di Palma S."/>
            <person name="Preisinger C."/>
            <person name="Peng M."/>
            <person name="Polat A.N."/>
            <person name="Heck A.J."/>
            <person name="Mohammed S."/>
        </authorList>
    </citation>
    <scope>PHOSPHORYLATION [LARGE SCALE ANALYSIS] AT SER-2; SER-27; SER-306; THR-455; SER-477; SER-520 AND SER-560</scope>
    <scope>IDENTIFICATION BY MASS SPECTROMETRY [LARGE SCALE ANALYSIS]</scope>
    <source>
        <tissue>Cervix carcinoma</tissue>
        <tissue>Erythroleukemia</tissue>
    </source>
</reference>
<reference key="42">
    <citation type="journal article" date="2014" name="J. Biol. Chem.">
        <title>A human short open reading frame (sORF)-encoded polypeptide that stimulates DNA end joining.</title>
        <authorList>
            <person name="Slavoff S.A."/>
            <person name="Heo J."/>
            <person name="Budnik B.A."/>
            <person name="Hanakahi L.A."/>
            <person name="Saghatelian A."/>
        </authorList>
    </citation>
    <scope>INTERACTION WITH CYREN</scope>
</reference>
<reference key="43">
    <citation type="journal article" date="2014" name="J. Proteomics">
        <title>An enzyme assisted RP-RPLC approach for in-depth analysis of human liver phosphoproteome.</title>
        <authorList>
            <person name="Bian Y."/>
            <person name="Song C."/>
            <person name="Cheng K."/>
            <person name="Dong M."/>
            <person name="Wang F."/>
            <person name="Huang J."/>
            <person name="Sun D."/>
            <person name="Wang L."/>
            <person name="Ye M."/>
            <person name="Zou H."/>
        </authorList>
    </citation>
    <scope>IDENTIFICATION BY MASS SPECTROMETRY [LARGE SCALE ANALYSIS]</scope>
    <source>
        <tissue>Liver</tissue>
    </source>
</reference>
<reference key="44">
    <citation type="journal article" date="2014" name="Nat. Struct. Mol. Biol.">
        <title>Uncovering global SUMOylation signaling networks in a site-specific manner.</title>
        <authorList>
            <person name="Hendriks I.A."/>
            <person name="D'Souza R.C."/>
            <person name="Yang B."/>
            <person name="Verlaan-de Vries M."/>
            <person name="Mann M."/>
            <person name="Vertegaal A.C."/>
        </authorList>
    </citation>
    <scope>SUMOYLATION [LARGE SCALE ANALYSIS] AT LYS-556</scope>
    <scope>IDENTIFICATION BY MASS SPECTROMETRY [LARGE SCALE ANALYSIS]</scope>
</reference>
<reference key="45">
    <citation type="journal article" date="2014" name="Nucleic Acids Res.">
        <title>PARP3 affects the relative contribution of homologous recombination and nonhomologous end-joining pathways.</title>
        <authorList>
            <person name="Beck C."/>
            <person name="Boehler C."/>
            <person name="Guirouilh Barbat J."/>
            <person name="Bonnet M.E."/>
            <person name="Illuzzi G."/>
            <person name="Ronde P."/>
            <person name="Gauthier L.R."/>
            <person name="Magroun N."/>
            <person name="Rajendran A."/>
            <person name="Lopez B.S."/>
            <person name="Scully R."/>
            <person name="Boussin F.D."/>
            <person name="Schreiber V."/>
            <person name="Dantzer F."/>
        </authorList>
    </citation>
    <scope>ADP-RIBOSYLATION</scope>
</reference>
<reference key="46">
    <citation type="journal article" date="2015" name="Cardiovasc. Res.">
        <title>DNA-dependent protein kinase (DNA-PK) permits vascular smooth muscle cell proliferation through phosphorylation of the orphan nuclear receptor NOR1.</title>
        <authorList>
            <person name="Medunjanin S."/>
            <person name="Daniel J.M."/>
            <person name="Weinert S."/>
            <person name="Dutzmann J."/>
            <person name="Burgbacher F."/>
            <person name="Brecht S."/>
            <person name="Bruemmer D."/>
            <person name="Kaehne T."/>
            <person name="Naumann M."/>
            <person name="Sedding D.G."/>
            <person name="Zuschratter W."/>
            <person name="Braun-Dullaeus R.C."/>
        </authorList>
    </citation>
    <scope>INTERACTION WITH NR4A3</scope>
</reference>
<reference key="47">
    <citation type="journal article" date="2015" name="Cell Death Differ.">
        <title>XLS (c9orf142) is a new component of mammalian DNA double-stranded break repair.</title>
        <authorList>
            <person name="Craxton A."/>
            <person name="Somers J."/>
            <person name="Munnur D."/>
            <person name="Jukes-Jones R."/>
            <person name="Cain K."/>
            <person name="Malewicz M."/>
        </authorList>
    </citation>
    <scope>SUBUNIT</scope>
</reference>
<reference key="48">
    <citation type="journal article" date="2015" name="Nat. Commun.">
        <title>Interactome analysis identifies a new paralogue of XRCC4 in non-homologous end joining DNA repair pathway.</title>
        <authorList>
            <person name="Xing M."/>
            <person name="Yang M."/>
            <person name="Huo W."/>
            <person name="Feng F."/>
            <person name="Wei L."/>
            <person name="Jiang W."/>
            <person name="Ning S."/>
            <person name="Yan Z."/>
            <person name="Li W."/>
            <person name="Wang Q."/>
            <person name="Hou M."/>
            <person name="Dong C."/>
            <person name="Guo R."/>
            <person name="Gao G."/>
            <person name="Ji J."/>
            <person name="Zha S."/>
            <person name="Lan L."/>
            <person name="Liang H."/>
            <person name="Xu D."/>
        </authorList>
    </citation>
    <scope>SUBUNIT</scope>
</reference>
<reference key="49">
    <citation type="journal article" date="2015" name="Oncotarget">
        <title>Heat shock factor 1, an inhibitor of non-homologous end joining repair.</title>
        <authorList>
            <person name="Kang G.Y."/>
            <person name="Kim E.H."/>
            <person name="Lee H.J."/>
            <person name="Gil N.Y."/>
            <person name="Cha H.J."/>
            <person name="Lee Y.S."/>
        </authorList>
    </citation>
    <scope>INTERACTION WITH HSF1</scope>
</reference>
<reference key="50">
    <citation type="journal article" date="2015" name="Proteomics">
        <title>N-terminome analysis of the human mitochondrial proteome.</title>
        <authorList>
            <person name="Vaca Jacome A.S."/>
            <person name="Rabilloud T."/>
            <person name="Schaeffer-Reiss C."/>
            <person name="Rompais M."/>
            <person name="Ayoub D."/>
            <person name="Lane L."/>
            <person name="Bairoch A."/>
            <person name="Van Dorsselaer A."/>
            <person name="Carapito C."/>
        </authorList>
    </citation>
    <scope>IDENTIFICATION BY MASS SPECTROMETRY [LARGE SCALE ANALYSIS]</scope>
</reference>
<reference key="51">
    <citation type="journal article" date="2015" name="Science">
        <title>DNA repair. PAXX, a paralog of XRCC4 and XLF, interacts with Ku to promote DNA double-strand break repair.</title>
        <authorList>
            <person name="Ochi T."/>
            <person name="Blackford A.N."/>
            <person name="Coates J."/>
            <person name="Jhujh S."/>
            <person name="Mehmood S."/>
            <person name="Tamura N."/>
            <person name="Travers J."/>
            <person name="Wu Q."/>
            <person name="Draviam V.M."/>
            <person name="Robinson C.V."/>
            <person name="Blundell T.L."/>
            <person name="Jackson S.P."/>
        </authorList>
    </citation>
    <scope>INTERACTION WITH PAXX</scope>
</reference>
<reference key="52">
    <citation type="journal article" date="2016" name="Cell Rep.">
        <title>Specific roles of XRCC4 paralogs PAXX and XLF during V(D)J recombination.</title>
        <authorList>
            <person name="Lescale C."/>
            <person name="Lenden Hasse H."/>
            <person name="Blackford A.N."/>
            <person name="Balmus G."/>
            <person name="Bianchi J.J."/>
            <person name="Yu W."/>
            <person name="Bacoccina L."/>
            <person name="Jarade A."/>
            <person name="Clouin C."/>
            <person name="Sivapalan R."/>
            <person name="Reina-San-Martin B."/>
            <person name="Jackson S.P."/>
            <person name="Deriano L."/>
        </authorList>
    </citation>
    <scope>INTERACTION WITH PAXX</scope>
</reference>
<reference key="53">
    <citation type="journal article" date="2016" name="Cell Rep.">
        <title>PAXX is an accessory c-NHEJ factor that associates with Ku70 and has overlapping functions with XLF.</title>
        <authorList>
            <person name="Tadi S.K."/>
            <person name="Tellier-Lebegue C."/>
            <person name="Nemoz C."/>
            <person name="Drevet P."/>
            <person name="Audebert S."/>
            <person name="Roy S."/>
            <person name="Meek K."/>
            <person name="Charbonnier J.B."/>
            <person name="Modesti M."/>
        </authorList>
    </citation>
    <scope>INTERACTION WITH PAXX</scope>
</reference>
<reference key="54">
    <citation type="journal article" date="2017" name="Mol. Cell">
        <title>HEXIM1 and NEAT1 Long non-coding RNA form a multi-subunit complex that regulates DNA-mediated innate immune response.</title>
        <authorList>
            <person name="Morchikh M."/>
            <person name="Cribier A."/>
            <person name="Raffel R."/>
            <person name="Amraoui S."/>
            <person name="Cau J."/>
            <person name="Severac D."/>
            <person name="Dubois E."/>
            <person name="Schwartz O."/>
            <person name="Bennasser Y."/>
            <person name="Benkirane M."/>
        </authorList>
    </citation>
    <scope>FUNCTION</scope>
    <scope>SUBCELLULAR LOCATION</scope>
    <scope>INTERACTION WITH PRKDC; XRCC5; HEXIM1; SFPQ; NONO; PSPC1; RBM14 AND MATR3</scope>
</reference>
<reference key="55">
    <citation type="journal article" date="2017" name="Nat. Struct. Mol. Biol.">
        <title>Site-specific mapping of the human SUMO proteome reveals co-modification with phosphorylation.</title>
        <authorList>
            <person name="Hendriks I.A."/>
            <person name="Lyon D."/>
            <person name="Young C."/>
            <person name="Jensen L.J."/>
            <person name="Vertegaal A.C."/>
            <person name="Nielsen M.L."/>
        </authorList>
    </citation>
    <scope>SUMOYLATION [LARGE SCALE ANALYSIS] AT LYS-287; LYS-317 AND LYS-556</scope>
    <scope>IDENTIFICATION BY MASS SPECTROMETRY [LARGE SCALE ANALYSIS]</scope>
</reference>
<reference key="56">
    <citation type="journal article" date="2017" name="Nature">
        <title>Regulation of DNA repair pathway choice in S and G2 phases by the NHEJ inhibitor CYREN.</title>
        <authorList>
            <person name="Arnoult N."/>
            <person name="Correia A."/>
            <person name="Ma J."/>
            <person name="Merlo A."/>
            <person name="Garcia-Gomez S."/>
            <person name="Maric M."/>
            <person name="Tognetti M."/>
            <person name="Benner C.W."/>
            <person name="Boulton S.J."/>
            <person name="Saghatelian A."/>
            <person name="Karlseder J."/>
        </authorList>
    </citation>
    <scope>INTERACTION WITH CYREN</scope>
</reference>
<reference key="57">
    <citation type="journal article" date="2018" name="J. Virol.">
        <title>non-homologous end joining (NHEJ).</title>
        <authorList>
            <person name="Rushing A.W."/>
            <person name="Hoang K."/>
            <person name="Polakowski N."/>
            <person name="Lemasson I."/>
        </authorList>
    </citation>
    <scope>INTERACTION WITH HUMAN T-CELL LEUKEMIA VIRUS 1/HTLV-1 PROTEIN HBZ</scope>
</reference>
<reference key="58">
    <citation type="journal article" date="2018" name="Nucleic Acids Res.">
        <title>ATF7 mediates TNF-alpha-induced telomere shortening.</title>
        <authorList>
            <person name="Maekawa T."/>
            <person name="Liu B."/>
            <person name="Nakai D."/>
            <person name="Yoshida K."/>
            <person name="Nakamura K.I."/>
            <person name="Yasukawa M."/>
            <person name="Koike M."/>
            <person name="Takubo K."/>
            <person name="Chatton B."/>
            <person name="Ishikawa F."/>
            <person name="Masutomi K."/>
            <person name="Ishii S."/>
        </authorList>
    </citation>
    <scope>INTERACTION WITH ATF7</scope>
</reference>
<reference key="59">
    <citation type="journal article" date="2001" name="J. Biol. Chem.">
        <title>The three-dimensional structure of the C-terminal DNA-binding domain of human Ku70.</title>
        <authorList>
            <person name="Zhang Z."/>
            <person name="Zhu L."/>
            <person name="Lin D."/>
            <person name="Chen F."/>
            <person name="Chen D.J."/>
            <person name="Chen Y."/>
        </authorList>
    </citation>
    <scope>STRUCTURE BY NMR OF 557-610</scope>
</reference>
<reference key="60">
    <citation type="journal article" date="2001" name="Nature">
        <title>Structure of the Ku heterodimer bound to DNA and its implications for double-strand break repair.</title>
        <authorList>
            <person name="Walker J.R."/>
            <person name="Corpina R.A."/>
            <person name="Goldberg J."/>
        </authorList>
    </citation>
    <scope>X-RAY CRYSTALLOGRAPHY (2.7 ANGSTROMS) OF 36-609 IN COMPLEX WITH XRCC5</scope>
    <scope>FUNCTION</scope>
</reference>
<reference evidence="48 49" key="61">
    <citation type="journal article" date="2021" name="Mol. Cell">
        <title>Cryo-EM of NHEJ supercomplexes provides insights into DNA repair.</title>
        <authorList>
            <person name="Chaplin A.K."/>
            <person name="Hardwick S.W."/>
            <person name="Stavridi A.K."/>
            <person name="Buehl C.J."/>
            <person name="Goff N.J."/>
            <person name="Ropars V."/>
            <person name="Liang S."/>
            <person name="De Oliveira T.M."/>
            <person name="Chirgadze D.Y."/>
            <person name="Meek K."/>
            <person name="Charbonnier J.B."/>
            <person name="Blundell T.L."/>
        </authorList>
    </citation>
    <scope>STRUCTURE BY ELECTRON MICROSCOPY (4.14 ANGSTROMS) IN COMPLEX WITH THE NHEJ COMPLEX AND DNA</scope>
    <scope>IDENTIFICATION IN THE NHEJ COMPLEX</scope>
</reference>
<reference evidence="46 47" key="62">
    <citation type="journal article" date="2021" name="Nature">
        <title>Structural basis of long-range to short-range synaptic transition in NHEJ.</title>
        <authorList>
            <person name="Chen S."/>
            <person name="Lee L."/>
            <person name="Naila T."/>
            <person name="Fishbain S."/>
            <person name="Wang A."/>
            <person name="Tomkinson A.E."/>
            <person name="Lees-Miller S.P."/>
            <person name="He Y."/>
        </authorList>
    </citation>
    <scope>STRUCTURE BY ELECTRON MICROSCOPY (4.6 ANGSTROMS) IN COMPLEX WITH THE NHEJ COMPLEX</scope>
    <scope>IDENTIFICATION IN THE NHEJ COMPLEX</scope>
</reference>
<reference key="63">
    <citation type="journal article" date="2004" name="Mol. Cell">
        <title>Acetylation of the C terminus of Ku70 by CBP and PCAF controls Bax-mediated apoptosis.</title>
        <authorList>
            <person name="Cohen H.Y."/>
            <person name="Lavu S."/>
            <person name="Bitterman K.J."/>
            <person name="Hekking B."/>
            <person name="Imahiyerobo T.A."/>
            <person name="Miller C."/>
            <person name="Frye R."/>
            <person name="Ploegh H."/>
            <person name="Kessler B.M."/>
            <person name="Sinclair D.A."/>
        </authorList>
    </citation>
    <scope>FUNCTION</scope>
    <scope>ACETYLATION AT LYS-317; LYS-331; LYS-338; LYS-539; LYS-542; LYS-542; LYS-544; LYS-553 AND LYS-556</scope>
    <scope>INTERACTION WITH BAX</scope>
    <scope>SUBCELLULAR LOCATION</scope>
    <scope>MUTAGENESIS OF LYS-539; LYS-542; LYS-544; LYS-553 AND LYS-556</scope>
</reference>
<reference key="64">
    <citation type="journal article" date="2008" name="Proc. Natl. Acad. Sci. U.S.A.">
        <title>Regulation of the proapoptotic factor Bax by Ku70-dependent deubiquitylation.</title>
        <authorList>
            <person name="Amsel A.D."/>
            <person name="Rathaus M."/>
            <person name="Kronman N."/>
            <person name="Cohen H.Y."/>
        </authorList>
    </citation>
    <scope>FUNCTION</scope>
</reference>
<reference key="65">
    <citation type="journal article" date="2022" name="Cell Rep.">
        <title>SETD4-mediated KU70 methylation suppresses apoptosis.</title>
        <authorList>
            <person name="Wang Y."/>
            <person name="Liu B."/>
            <person name="Lu H."/>
            <person name="Liu J."/>
            <person name="Romanienko P.J."/>
            <person name="Montelione G.T."/>
            <person name="Shen Z."/>
        </authorList>
    </citation>
    <scope>FUNCTION</scope>
    <scope>SUBCELLULAR LOCATION</scope>
    <scope>METHYLATION AT LYS-570</scope>
    <scope>INTERACTION WITH XRCC5</scope>
    <scope>MUTAGENESIS OF LYS-570</scope>
</reference>
<dbReference type="EC" id="3.6.4.-"/>
<dbReference type="EC" id="4.2.99.-"/>
<dbReference type="EMBL" id="J04607">
    <property type="protein sequence ID" value="AAA61177.1"/>
    <property type="molecule type" value="mRNA"/>
</dbReference>
<dbReference type="EMBL" id="J04611">
    <property type="protein sequence ID" value="AAA51733.1"/>
    <property type="molecule type" value="mRNA"/>
</dbReference>
<dbReference type="EMBL" id="M32865">
    <property type="protein sequence ID" value="AAA36155.1"/>
    <property type="molecule type" value="mRNA"/>
</dbReference>
<dbReference type="EMBL" id="S38729">
    <property type="protein sequence ID" value="AAB22381.1"/>
    <property type="molecule type" value="mRNA"/>
</dbReference>
<dbReference type="EMBL" id="AK055786">
    <property type="protein sequence ID" value="BAG51575.1"/>
    <property type="molecule type" value="mRNA"/>
</dbReference>
<dbReference type="EMBL" id="CR542219">
    <property type="protein sequence ID" value="CAG47015.1"/>
    <property type="molecule type" value="mRNA"/>
</dbReference>
<dbReference type="EMBL" id="AY870329">
    <property type="protein sequence ID" value="AAW34364.1"/>
    <property type="molecule type" value="Genomic_DNA"/>
</dbReference>
<dbReference type="EMBL" id="Z83840">
    <property type="status" value="NOT_ANNOTATED_CDS"/>
    <property type="molecule type" value="Genomic_DNA"/>
</dbReference>
<dbReference type="EMBL" id="CH471095">
    <property type="protein sequence ID" value="EAW60448.1"/>
    <property type="molecule type" value="Genomic_DNA"/>
</dbReference>
<dbReference type="EMBL" id="BC008343">
    <property type="protein sequence ID" value="AAH08343.1"/>
    <property type="molecule type" value="mRNA"/>
</dbReference>
<dbReference type="EMBL" id="BC010034">
    <property type="protein sequence ID" value="AAH10034.1"/>
    <property type="molecule type" value="mRNA"/>
</dbReference>
<dbReference type="EMBL" id="BC012154">
    <property type="protein sequence ID" value="AAH12154.1"/>
    <property type="molecule type" value="mRNA"/>
</dbReference>
<dbReference type="EMBL" id="BC018259">
    <property type="protein sequence ID" value="AAH18259.1"/>
    <property type="molecule type" value="mRNA"/>
</dbReference>
<dbReference type="EMBL" id="BC072449">
    <property type="protein sequence ID" value="AAH72449.1"/>
    <property type="molecule type" value="mRNA"/>
</dbReference>
<dbReference type="CCDS" id="CCDS14021.1">
    <molecule id="P12956-1"/>
</dbReference>
<dbReference type="CCDS" id="CCDS74870.1">
    <molecule id="P12956-2"/>
</dbReference>
<dbReference type="PIR" id="A30299">
    <property type="entry name" value="A30894"/>
</dbReference>
<dbReference type="RefSeq" id="NP_001275905.1">
    <molecule id="P12956-1"/>
    <property type="nucleotide sequence ID" value="NM_001288976.2"/>
</dbReference>
<dbReference type="RefSeq" id="NP_001275906.1">
    <molecule id="P12956-2"/>
    <property type="nucleotide sequence ID" value="NM_001288977.2"/>
</dbReference>
<dbReference type="RefSeq" id="NP_001460.1">
    <molecule id="P12956-1"/>
    <property type="nucleotide sequence ID" value="NM_001469.5"/>
</dbReference>
<dbReference type="PDB" id="1JEQ">
    <property type="method" value="X-ray"/>
    <property type="resolution" value="2.70 A"/>
    <property type="chains" value="A=1-609"/>
</dbReference>
<dbReference type="PDB" id="1JEY">
    <property type="method" value="X-ray"/>
    <property type="resolution" value="2.50 A"/>
    <property type="chains" value="A=1-609"/>
</dbReference>
<dbReference type="PDB" id="1JJR">
    <property type="method" value="NMR"/>
    <property type="chains" value="A=556-609"/>
</dbReference>
<dbReference type="PDB" id="3RZX">
    <property type="method" value="X-ray"/>
    <property type="resolution" value="2.61 A"/>
    <property type="chains" value="B=537-558"/>
</dbReference>
<dbReference type="PDB" id="5Y3R">
    <property type="method" value="EM"/>
    <property type="resolution" value="6.60 A"/>
    <property type="chains" value="A=34-534"/>
</dbReference>
<dbReference type="PDB" id="6ERF">
    <property type="method" value="X-ray"/>
    <property type="resolution" value="3.01 A"/>
    <property type="chains" value="A/C/E/G=1-544"/>
</dbReference>
<dbReference type="PDB" id="6ERG">
    <property type="method" value="X-ray"/>
    <property type="resolution" value="2.90 A"/>
    <property type="chains" value="A/D=1-544"/>
</dbReference>
<dbReference type="PDB" id="6ERH">
    <property type="method" value="X-ray"/>
    <property type="resolution" value="2.80 A"/>
    <property type="chains" value="A/C=1-544"/>
</dbReference>
<dbReference type="PDB" id="6ZHA">
    <property type="method" value="EM"/>
    <property type="resolution" value="3.91 A"/>
    <property type="chains" value="B=1-609"/>
</dbReference>
<dbReference type="PDB" id="6ZHE">
    <property type="method" value="EM"/>
    <property type="resolution" value="7.24 A"/>
    <property type="chains" value="B/G=1-609"/>
</dbReference>
<dbReference type="PDB" id="7AXZ">
    <property type="method" value="EM"/>
    <property type="resolution" value="3.20 A"/>
    <property type="chains" value="A=1-609"/>
</dbReference>
<dbReference type="PDB" id="7K0Y">
    <property type="method" value="EM"/>
    <property type="resolution" value="3.70 A"/>
    <property type="chains" value="B=1-609"/>
</dbReference>
<dbReference type="PDB" id="7K1J">
    <property type="method" value="EM"/>
    <property type="resolution" value="3.90 A"/>
    <property type="chains" value="B=1-609"/>
</dbReference>
<dbReference type="PDB" id="7K1K">
    <property type="method" value="EM"/>
    <property type="resolution" value="4.10 A"/>
    <property type="chains" value="B=1-609"/>
</dbReference>
<dbReference type="PDB" id="7K1N">
    <property type="method" value="EM"/>
    <property type="resolution" value="3.90 A"/>
    <property type="chains" value="B=1-609"/>
</dbReference>
<dbReference type="PDB" id="7LSY">
    <property type="method" value="EM"/>
    <property type="resolution" value="8.40 A"/>
    <property type="chains" value="A/J=1-600"/>
</dbReference>
<dbReference type="PDB" id="7LT3">
    <property type="method" value="EM"/>
    <property type="resolution" value="4.60 A"/>
    <property type="chains" value="A/J=1-609"/>
</dbReference>
<dbReference type="PDB" id="7NFC">
    <property type="method" value="EM"/>
    <property type="resolution" value="4.14 A"/>
    <property type="chains" value="B/G=1-609"/>
</dbReference>
<dbReference type="PDB" id="7NFE">
    <property type="method" value="EM"/>
    <property type="resolution" value="4.29 A"/>
    <property type="chains" value="B=1-609"/>
</dbReference>
<dbReference type="PDB" id="7SGL">
    <property type="method" value="EM"/>
    <property type="resolution" value="3.00 A"/>
    <property type="chains" value="B=1-609"/>
</dbReference>
<dbReference type="PDB" id="7SU3">
    <property type="method" value="EM"/>
    <property type="resolution" value="3.30 A"/>
    <property type="chains" value="B=1-609"/>
</dbReference>
<dbReference type="PDB" id="7Z6O">
    <property type="method" value="X-ray"/>
    <property type="resolution" value="3.70 A"/>
    <property type="chains" value="A=1-609"/>
</dbReference>
<dbReference type="PDB" id="7Z87">
    <property type="method" value="EM"/>
    <property type="resolution" value="2.91 A"/>
    <property type="chains" value="B=1-609"/>
</dbReference>
<dbReference type="PDB" id="7Z88">
    <property type="method" value="EM"/>
    <property type="resolution" value="3.33 A"/>
    <property type="chains" value="B=1-609"/>
</dbReference>
<dbReference type="PDB" id="7ZT6">
    <property type="method" value="EM"/>
    <property type="resolution" value="3.50 A"/>
    <property type="chains" value="A=1-609"/>
</dbReference>
<dbReference type="PDB" id="7ZVT">
    <property type="method" value="EM"/>
    <property type="resolution" value="2.74 A"/>
    <property type="chains" value="A=1-609"/>
</dbReference>
<dbReference type="PDB" id="7ZWA">
    <property type="method" value="EM"/>
    <property type="resolution" value="2.80 A"/>
    <property type="chains" value="A=1-609"/>
</dbReference>
<dbReference type="PDB" id="7ZYG">
    <property type="method" value="EM"/>
    <property type="resolution" value="2.68 A"/>
    <property type="chains" value="A=1-609"/>
</dbReference>
<dbReference type="PDB" id="8AG4">
    <property type="method" value="EM"/>
    <property type="resolution" value="2.46 A"/>
    <property type="chains" value="A=1-609"/>
</dbReference>
<dbReference type="PDB" id="8AG5">
    <property type="method" value="EM"/>
    <property type="resolution" value="3.47 A"/>
    <property type="chains" value="A=1-609"/>
</dbReference>
<dbReference type="PDB" id="8ASC">
    <property type="method" value="X-ray"/>
    <property type="resolution" value="2.95 A"/>
    <property type="chains" value="A/E/K/O=1-544"/>
</dbReference>
<dbReference type="PDB" id="8BH3">
    <property type="method" value="EM"/>
    <property type="resolution" value="4.55 A"/>
    <property type="chains" value="B/T=1-609"/>
</dbReference>
<dbReference type="PDB" id="8BHV">
    <property type="method" value="EM"/>
    <property type="resolution" value="4.51 A"/>
    <property type="chains" value="a/h=1-609"/>
</dbReference>
<dbReference type="PDB" id="8BHY">
    <property type="method" value="EM"/>
    <property type="resolution" value="5.33 A"/>
    <property type="chains" value="B/T=1-609"/>
</dbReference>
<dbReference type="PDB" id="8BOT">
    <property type="method" value="EM"/>
    <property type="resolution" value="7.76 A"/>
    <property type="chains" value="B/G/T=1-609"/>
</dbReference>
<dbReference type="PDB" id="8EZA">
    <property type="method" value="EM"/>
    <property type="resolution" value="4.39 A"/>
    <property type="chains" value="A/J=1-609"/>
</dbReference>
<dbReference type="PDB" id="8EZB">
    <property type="method" value="EM"/>
    <property type="resolution" value="8.90 A"/>
    <property type="chains" value="A/J=1-609"/>
</dbReference>
<dbReference type="PDB" id="8RD4">
    <property type="method" value="EM"/>
    <property type="resolution" value="3.58 A"/>
    <property type="chains" value="E=1-609"/>
</dbReference>
<dbReference type="PDBsum" id="1JEQ"/>
<dbReference type="PDBsum" id="1JEY"/>
<dbReference type="PDBsum" id="1JJR"/>
<dbReference type="PDBsum" id="3RZX"/>
<dbReference type="PDBsum" id="5Y3R"/>
<dbReference type="PDBsum" id="6ERF"/>
<dbReference type="PDBsum" id="6ERG"/>
<dbReference type="PDBsum" id="6ERH"/>
<dbReference type="PDBsum" id="6ZHA"/>
<dbReference type="PDBsum" id="6ZHE"/>
<dbReference type="PDBsum" id="7AXZ"/>
<dbReference type="PDBsum" id="7K0Y"/>
<dbReference type="PDBsum" id="7K1J"/>
<dbReference type="PDBsum" id="7K1K"/>
<dbReference type="PDBsum" id="7K1N"/>
<dbReference type="PDBsum" id="7LSY"/>
<dbReference type="PDBsum" id="7LT3"/>
<dbReference type="PDBsum" id="7NFC"/>
<dbReference type="PDBsum" id="7NFE"/>
<dbReference type="PDBsum" id="7SGL"/>
<dbReference type="PDBsum" id="7SU3"/>
<dbReference type="PDBsum" id="7Z6O"/>
<dbReference type="PDBsum" id="7Z87"/>
<dbReference type="PDBsum" id="7Z88"/>
<dbReference type="PDBsum" id="7ZT6"/>
<dbReference type="PDBsum" id="7ZVT"/>
<dbReference type="PDBsum" id="7ZWA"/>
<dbReference type="PDBsum" id="7ZYG"/>
<dbReference type="PDBsum" id="8AG4"/>
<dbReference type="PDBsum" id="8AG5"/>
<dbReference type="PDBsum" id="8ASC"/>
<dbReference type="PDBsum" id="8BH3"/>
<dbReference type="PDBsum" id="8BHV"/>
<dbReference type="PDBsum" id="8BHY"/>
<dbReference type="PDBsum" id="8BOT"/>
<dbReference type="PDBsum" id="8EZA"/>
<dbReference type="PDBsum" id="8EZB"/>
<dbReference type="PDBsum" id="8RD4"/>
<dbReference type="BMRB" id="P12956"/>
<dbReference type="EMDB" id="EMD-11217"/>
<dbReference type="EMDB" id="EMD-11219"/>
<dbReference type="EMDB" id="EMD-11933"/>
<dbReference type="EMDB" id="EMD-12299"/>
<dbReference type="EMDB" id="EMD-12301"/>
<dbReference type="EMDB" id="EMD-14545"/>
<dbReference type="EMDB" id="EMD-14546"/>
<dbReference type="EMDB" id="EMD-14955"/>
<dbReference type="EMDB" id="EMD-14986"/>
<dbReference type="EMDB" id="EMD-14995"/>
<dbReference type="EMDB" id="EMD-15022"/>
<dbReference type="EMDB" id="EMD-15415"/>
<dbReference type="EMDB" id="EMD-15416"/>
<dbReference type="EMDB" id="EMD-16044"/>
<dbReference type="EMDB" id="EMD-16070"/>
<dbReference type="EMDB" id="EMD-16074"/>
<dbReference type="EMDB" id="EMD-16145"/>
<dbReference type="EMDB" id="EMD-19065"/>
<dbReference type="EMDB" id="EMD-22618"/>
<dbReference type="EMDB" id="EMD-22624"/>
<dbReference type="EMDB" id="EMD-22625"/>
<dbReference type="EMDB" id="EMD-22626"/>
<dbReference type="EMDB" id="EMD-23509"/>
<dbReference type="EMDB" id="EMD-23510"/>
<dbReference type="EMDB" id="EMD-23511"/>
<dbReference type="EMDB" id="EMD-23513"/>
<dbReference type="EMDB" id="EMD-23514"/>
<dbReference type="EMDB" id="EMD-25113"/>
<dbReference type="EMDB" id="EMD-25439"/>
<dbReference type="EMDB" id="EMD-28732"/>
<dbReference type="EMDB" id="EMD-28733"/>
<dbReference type="EMDB" id="EMD-28735"/>
<dbReference type="EMDB" id="EMD-28738"/>
<dbReference type="EMDB" id="EMD-6803"/>
<dbReference type="SASBDB" id="P12956"/>
<dbReference type="SMR" id="P12956"/>
<dbReference type="BioGRID" id="108822">
    <property type="interactions" value="937"/>
</dbReference>
<dbReference type="ComplexPortal" id="CPX-1993">
    <property type="entry name" value="Ku70:Ku80 complex"/>
</dbReference>
<dbReference type="CORUM" id="P12956"/>
<dbReference type="DIP" id="DIP-24188N"/>
<dbReference type="ELM" id="P12956"/>
<dbReference type="FunCoup" id="P12956">
    <property type="interactions" value="2345"/>
</dbReference>
<dbReference type="IntAct" id="P12956">
    <property type="interactions" value="344"/>
</dbReference>
<dbReference type="MINT" id="P12956"/>
<dbReference type="STRING" id="9606.ENSP00000352257"/>
<dbReference type="ChEMBL" id="CHEMBL4106136"/>
<dbReference type="MoonDB" id="P12956">
    <property type="type" value="Curated"/>
</dbReference>
<dbReference type="GlyCosmos" id="P12956">
    <property type="glycosylation" value="1 site, 1 glycan"/>
</dbReference>
<dbReference type="GlyGen" id="P12956">
    <property type="glycosylation" value="3 sites, 3 N-linked glycans (2 sites), 1 O-linked glycan (1 site)"/>
</dbReference>
<dbReference type="iPTMnet" id="P12956"/>
<dbReference type="MetOSite" id="P12956"/>
<dbReference type="PhosphoSitePlus" id="P12956"/>
<dbReference type="SwissPalm" id="P12956"/>
<dbReference type="BioMuta" id="XRCC6"/>
<dbReference type="DMDM" id="125729"/>
<dbReference type="jPOST" id="P12956"/>
<dbReference type="MassIVE" id="P12956"/>
<dbReference type="PaxDb" id="9606-ENSP00000352257"/>
<dbReference type="PeptideAtlas" id="P12956"/>
<dbReference type="ProteomicsDB" id="2929"/>
<dbReference type="ProteomicsDB" id="52888">
    <molecule id="P12956-1"/>
</dbReference>
<dbReference type="Pumba" id="P12956"/>
<dbReference type="Antibodypedia" id="3790">
    <property type="antibodies" value="1322 antibodies from 42 providers"/>
</dbReference>
<dbReference type="DNASU" id="2547"/>
<dbReference type="Ensembl" id="ENST00000359308.8">
    <molecule id="P12956-1"/>
    <property type="protein sequence ID" value="ENSP00000352257.4"/>
    <property type="gene ID" value="ENSG00000196419.13"/>
</dbReference>
<dbReference type="Ensembl" id="ENST00000360079.8">
    <molecule id="P12956-1"/>
    <property type="protein sequence ID" value="ENSP00000353192.3"/>
    <property type="gene ID" value="ENSG00000196419.13"/>
</dbReference>
<dbReference type="Ensembl" id="ENST00000402580.7">
    <molecule id="P12956-2"/>
    <property type="protein sequence ID" value="ENSP00000384941.3"/>
    <property type="gene ID" value="ENSG00000196419.13"/>
</dbReference>
<dbReference type="Ensembl" id="ENST00000405878.5">
    <molecule id="P12956-1"/>
    <property type="protein sequence ID" value="ENSP00000384257.1"/>
    <property type="gene ID" value="ENSG00000196419.13"/>
</dbReference>
<dbReference type="GeneID" id="2547"/>
<dbReference type="KEGG" id="hsa:2547"/>
<dbReference type="MANE-Select" id="ENST00000360079.8">
    <property type="protein sequence ID" value="ENSP00000353192.3"/>
    <property type="RefSeq nucleotide sequence ID" value="NM_001469.5"/>
    <property type="RefSeq protein sequence ID" value="NP_001460.1"/>
</dbReference>
<dbReference type="UCSC" id="uc003bao.3">
    <molecule id="P12956-1"/>
    <property type="organism name" value="human"/>
</dbReference>
<dbReference type="AGR" id="HGNC:4055"/>
<dbReference type="CTD" id="2547"/>
<dbReference type="DisGeNET" id="2547"/>
<dbReference type="GeneCards" id="XRCC6"/>
<dbReference type="HGNC" id="HGNC:4055">
    <property type="gene designation" value="XRCC6"/>
</dbReference>
<dbReference type="HPA" id="ENSG00000196419">
    <property type="expression patterns" value="Low tissue specificity"/>
</dbReference>
<dbReference type="MIM" id="152690">
    <property type="type" value="gene"/>
</dbReference>
<dbReference type="neXtProt" id="NX_P12956"/>
<dbReference type="OpenTargets" id="ENSG00000196419"/>
<dbReference type="PharmGKB" id="PA28467"/>
<dbReference type="VEuPathDB" id="HostDB:ENSG00000196419"/>
<dbReference type="eggNOG" id="KOG2327">
    <property type="taxonomic scope" value="Eukaryota"/>
</dbReference>
<dbReference type="GeneTree" id="ENSGT00940000153239"/>
<dbReference type="HOGENOM" id="CLU_014815_2_0_1"/>
<dbReference type="InParanoid" id="P12956"/>
<dbReference type="OMA" id="FWANVKH"/>
<dbReference type="OrthoDB" id="3249161at2759"/>
<dbReference type="PAN-GO" id="P12956">
    <property type="GO annotations" value="7 GO annotations based on evolutionary models"/>
</dbReference>
<dbReference type="PhylomeDB" id="P12956"/>
<dbReference type="TreeFam" id="TF315101"/>
<dbReference type="PathwayCommons" id="P12956"/>
<dbReference type="Reactome" id="R-HSA-164843">
    <property type="pathway name" value="2-LTR circle formation"/>
</dbReference>
<dbReference type="Reactome" id="R-HSA-1834949">
    <property type="pathway name" value="Cytosolic sensors of pathogen-associated DNA"/>
</dbReference>
<dbReference type="Reactome" id="R-HSA-3270619">
    <property type="pathway name" value="IRF3-mediated induction of type I IFN"/>
</dbReference>
<dbReference type="Reactome" id="R-HSA-5693571">
    <property type="pathway name" value="Nonhomologous End-Joining (NHEJ)"/>
</dbReference>
<dbReference type="Reactome" id="R-HSA-6798695">
    <property type="pathway name" value="Neutrophil degranulation"/>
</dbReference>
<dbReference type="SignaLink" id="P12956"/>
<dbReference type="SIGNOR" id="P12956"/>
<dbReference type="BioGRID-ORCS" id="2547">
    <property type="hits" value="843 hits in 1139 CRISPR screens"/>
</dbReference>
<dbReference type="CD-CODE" id="232F8A39">
    <property type="entry name" value="P-body"/>
</dbReference>
<dbReference type="CD-CODE" id="91857CE7">
    <property type="entry name" value="Nucleolus"/>
</dbReference>
<dbReference type="ChiTaRS" id="XRCC6">
    <property type="organism name" value="human"/>
</dbReference>
<dbReference type="EvolutionaryTrace" id="P12956"/>
<dbReference type="GeneWiki" id="Ku70"/>
<dbReference type="GenomeRNAi" id="2547"/>
<dbReference type="Pharos" id="P12956">
    <property type="development level" value="Tbio"/>
</dbReference>
<dbReference type="PRO" id="PR:P12956"/>
<dbReference type="Proteomes" id="UP000005640">
    <property type="component" value="Chromosome 22"/>
</dbReference>
<dbReference type="RNAct" id="P12956">
    <property type="molecule type" value="protein"/>
</dbReference>
<dbReference type="Bgee" id="ENSG00000196419">
    <property type="expression patterns" value="Expressed in right testis and 214 other cell types or tissues"/>
</dbReference>
<dbReference type="ExpressionAtlas" id="P12956">
    <property type="expression patterns" value="baseline and differential"/>
</dbReference>
<dbReference type="GO" id="GO:0000781">
    <property type="term" value="C:chromosome, telomeric region"/>
    <property type="evidence" value="ECO:0007005"/>
    <property type="project" value="BHF-UCL"/>
</dbReference>
<dbReference type="GO" id="GO:0005829">
    <property type="term" value="C:cytosol"/>
    <property type="evidence" value="ECO:0000304"/>
    <property type="project" value="Reactome"/>
</dbReference>
<dbReference type="GO" id="GO:0070418">
    <property type="term" value="C:DNA-dependent protein kinase complex"/>
    <property type="evidence" value="ECO:0000353"/>
    <property type="project" value="ComplexPortal"/>
</dbReference>
<dbReference type="GO" id="GO:0005958">
    <property type="term" value="C:DNA-dependent protein kinase-DNA ligase 4 complex"/>
    <property type="evidence" value="ECO:0000314"/>
    <property type="project" value="UniProtKB"/>
</dbReference>
<dbReference type="GO" id="GO:0005576">
    <property type="term" value="C:extracellular region"/>
    <property type="evidence" value="ECO:0000304"/>
    <property type="project" value="Reactome"/>
</dbReference>
<dbReference type="GO" id="GO:1904813">
    <property type="term" value="C:ficolin-1-rich granule lumen"/>
    <property type="evidence" value="ECO:0000304"/>
    <property type="project" value="Reactome"/>
</dbReference>
<dbReference type="GO" id="GO:0043564">
    <property type="term" value="C:Ku70:Ku80 complex"/>
    <property type="evidence" value="ECO:0000314"/>
    <property type="project" value="UniProtKB"/>
</dbReference>
<dbReference type="GO" id="GO:0016020">
    <property type="term" value="C:membrane"/>
    <property type="evidence" value="ECO:0007005"/>
    <property type="project" value="UniProtKB"/>
</dbReference>
<dbReference type="GO" id="GO:0070419">
    <property type="term" value="C:nonhomologous end joining complex"/>
    <property type="evidence" value="ECO:0000314"/>
    <property type="project" value="UniProtKB"/>
</dbReference>
<dbReference type="GO" id="GO:0000783">
    <property type="term" value="C:nuclear telomere cap complex"/>
    <property type="evidence" value="ECO:0000304"/>
    <property type="project" value="BHF-UCL"/>
</dbReference>
<dbReference type="GO" id="GO:0005730">
    <property type="term" value="C:nucleolus"/>
    <property type="evidence" value="ECO:0000314"/>
    <property type="project" value="UniProtKB"/>
</dbReference>
<dbReference type="GO" id="GO:0005654">
    <property type="term" value="C:nucleoplasm"/>
    <property type="evidence" value="ECO:0000314"/>
    <property type="project" value="HPA"/>
</dbReference>
<dbReference type="GO" id="GO:0005634">
    <property type="term" value="C:nucleus"/>
    <property type="evidence" value="ECO:0000304"/>
    <property type="project" value="ProtInc"/>
</dbReference>
<dbReference type="GO" id="GO:0032991">
    <property type="term" value="C:protein-containing complex"/>
    <property type="evidence" value="ECO:0000314"/>
    <property type="project" value="CAFA"/>
</dbReference>
<dbReference type="GO" id="GO:0032993">
    <property type="term" value="C:protein-DNA complex"/>
    <property type="evidence" value="ECO:0000314"/>
    <property type="project" value="CAFA"/>
</dbReference>
<dbReference type="GO" id="GO:0034774">
    <property type="term" value="C:secretory granule lumen"/>
    <property type="evidence" value="ECO:0000304"/>
    <property type="project" value="Reactome"/>
</dbReference>
<dbReference type="GO" id="GO:0005667">
    <property type="term" value="C:transcription regulator complex"/>
    <property type="evidence" value="ECO:0000314"/>
    <property type="project" value="UniProtKB"/>
</dbReference>
<dbReference type="GO" id="GO:0051575">
    <property type="term" value="F:5'-deoxyribose-5-phosphate lyase activity"/>
    <property type="evidence" value="ECO:0000315"/>
    <property type="project" value="UniProtKB"/>
</dbReference>
<dbReference type="GO" id="GO:0005524">
    <property type="term" value="F:ATP binding"/>
    <property type="evidence" value="ECO:0007669"/>
    <property type="project" value="UniProtKB-KW"/>
</dbReference>
<dbReference type="GO" id="GO:0016887">
    <property type="term" value="F:ATP hydrolysis activity"/>
    <property type="evidence" value="ECO:0000314"/>
    <property type="project" value="FlyBase"/>
</dbReference>
<dbReference type="GO" id="GO:0008094">
    <property type="term" value="F:ATP-dependent activity, acting on DNA"/>
    <property type="evidence" value="ECO:0000314"/>
    <property type="project" value="FlyBase"/>
</dbReference>
<dbReference type="GO" id="GO:0030332">
    <property type="term" value="F:cyclin binding"/>
    <property type="evidence" value="ECO:0000353"/>
    <property type="project" value="UniProtKB"/>
</dbReference>
<dbReference type="GO" id="GO:0003684">
    <property type="term" value="F:damaged DNA binding"/>
    <property type="evidence" value="ECO:0007669"/>
    <property type="project" value="InterPro"/>
</dbReference>
<dbReference type="GO" id="GO:0003677">
    <property type="term" value="F:DNA binding"/>
    <property type="evidence" value="ECO:0000303"/>
    <property type="project" value="UniProtKB"/>
</dbReference>
<dbReference type="GO" id="GO:0003678">
    <property type="term" value="F:DNA helicase activity"/>
    <property type="evidence" value="ECO:0000314"/>
    <property type="project" value="FlyBase"/>
</dbReference>
<dbReference type="GO" id="GO:0003690">
    <property type="term" value="F:double-stranded DNA binding"/>
    <property type="evidence" value="ECO:0000304"/>
    <property type="project" value="ProtInc"/>
</dbReference>
<dbReference type="GO" id="GO:0044877">
    <property type="term" value="F:protein-containing complex binding"/>
    <property type="evidence" value="ECO:0000353"/>
    <property type="project" value="BHF-UCL"/>
</dbReference>
<dbReference type="GO" id="GO:0003723">
    <property type="term" value="F:RNA binding"/>
    <property type="evidence" value="ECO:0007005"/>
    <property type="project" value="UniProtKB"/>
</dbReference>
<dbReference type="GO" id="GO:0097110">
    <property type="term" value="F:scaffold protein binding"/>
    <property type="evidence" value="ECO:0000353"/>
    <property type="project" value="ARUK-UCL"/>
</dbReference>
<dbReference type="GO" id="GO:0042162">
    <property type="term" value="F:telomeric DNA binding"/>
    <property type="evidence" value="ECO:0000318"/>
    <property type="project" value="GO_Central"/>
</dbReference>
<dbReference type="GO" id="GO:0000976">
    <property type="term" value="F:transcription cis-regulatory region binding"/>
    <property type="evidence" value="ECO:0000314"/>
    <property type="project" value="BHF-UCL"/>
</dbReference>
<dbReference type="GO" id="GO:0002218">
    <property type="term" value="P:activation of innate immune response"/>
    <property type="evidence" value="ECO:0000314"/>
    <property type="project" value="UniProtKB"/>
</dbReference>
<dbReference type="GO" id="GO:0071475">
    <property type="term" value="P:cellular hyperosmotic salinity response"/>
    <property type="evidence" value="ECO:0007669"/>
    <property type="project" value="Ensembl"/>
</dbReference>
<dbReference type="GO" id="GO:0071480">
    <property type="term" value="P:cellular response to gamma radiation"/>
    <property type="evidence" value="ECO:0000314"/>
    <property type="project" value="UniProtKB"/>
</dbReference>
<dbReference type="GO" id="GO:0071481">
    <property type="term" value="P:cellular response to X-ray"/>
    <property type="evidence" value="ECO:0007669"/>
    <property type="project" value="Ensembl"/>
</dbReference>
<dbReference type="GO" id="GO:0097680">
    <property type="term" value="P:double-strand break repair via classical nonhomologous end joining"/>
    <property type="evidence" value="ECO:0000314"/>
    <property type="project" value="UniProtKB"/>
</dbReference>
<dbReference type="GO" id="GO:0006303">
    <property type="term" value="P:double-strand break repair via nonhomologous end joining"/>
    <property type="evidence" value="ECO:0000315"/>
    <property type="project" value="UniProtKB"/>
</dbReference>
<dbReference type="GO" id="GO:0045087">
    <property type="term" value="P:innate immune response"/>
    <property type="evidence" value="ECO:0007669"/>
    <property type="project" value="UniProtKB-KW"/>
</dbReference>
<dbReference type="GO" id="GO:0045892">
    <property type="term" value="P:negative regulation of DNA-templated transcription"/>
    <property type="evidence" value="ECO:0000315"/>
    <property type="project" value="UniProtKB"/>
</dbReference>
<dbReference type="GO" id="GO:0045893">
    <property type="term" value="P:positive regulation of DNA-templated transcription"/>
    <property type="evidence" value="ECO:0000314"/>
    <property type="project" value="UniProtKB"/>
</dbReference>
<dbReference type="GO" id="GO:0045621">
    <property type="term" value="P:positive regulation of lymphocyte differentiation"/>
    <property type="evidence" value="ECO:0000250"/>
    <property type="project" value="UniProtKB"/>
</dbReference>
<dbReference type="GO" id="GO:0045860">
    <property type="term" value="P:positive regulation of protein kinase activity"/>
    <property type="evidence" value="ECO:0000314"/>
    <property type="project" value="CAFA"/>
</dbReference>
<dbReference type="GO" id="GO:0045944">
    <property type="term" value="P:positive regulation of transcription by RNA polymerase II"/>
    <property type="evidence" value="ECO:0000315"/>
    <property type="project" value="BHF-UCL"/>
</dbReference>
<dbReference type="GO" id="GO:0000725">
    <property type="term" value="P:recombinational repair"/>
    <property type="evidence" value="ECO:0000303"/>
    <property type="project" value="ComplexPortal"/>
</dbReference>
<dbReference type="GO" id="GO:0048660">
    <property type="term" value="P:regulation of smooth muscle cell proliferation"/>
    <property type="evidence" value="ECO:0000315"/>
    <property type="project" value="UniProtKB"/>
</dbReference>
<dbReference type="GO" id="GO:0000723">
    <property type="term" value="P:telomere maintenance"/>
    <property type="evidence" value="ECO:0000318"/>
    <property type="project" value="GO_Central"/>
</dbReference>
<dbReference type="CDD" id="cd00788">
    <property type="entry name" value="KU70"/>
    <property type="match status" value="1"/>
</dbReference>
<dbReference type="CDD" id="cd01458">
    <property type="entry name" value="vWA_ku"/>
    <property type="match status" value="1"/>
</dbReference>
<dbReference type="DisProt" id="DP01254"/>
<dbReference type="FunFam" id="1.10.720.30:FF:000007">
    <property type="entry name" value="X-ray repair cross complementing 6"/>
    <property type="match status" value="1"/>
</dbReference>
<dbReference type="FunFam" id="2.40.290.10:FF:000010">
    <property type="entry name" value="X-ray repair cross-complementing protein 6"/>
    <property type="match status" value="1"/>
</dbReference>
<dbReference type="FunFam" id="3.40.50.410:FF:000031">
    <property type="entry name" value="X-ray repair cross-complementing protein 6 isoform X1"/>
    <property type="match status" value="1"/>
</dbReference>
<dbReference type="FunFam" id="4.10.970.10:FF:000001">
    <property type="entry name" value="X-ray repair cross-complementing protein 6 isoform X1"/>
    <property type="match status" value="1"/>
</dbReference>
<dbReference type="FunFam" id="1.10.1600.10:FF:000001">
    <property type="entry name" value="X-ray repair cross-complementing protein 6 isoform X2"/>
    <property type="match status" value="1"/>
</dbReference>
<dbReference type="Gene3D" id="1.10.1600.10">
    <property type="match status" value="1"/>
</dbReference>
<dbReference type="Gene3D" id="2.40.290.10">
    <property type="match status" value="1"/>
</dbReference>
<dbReference type="Gene3D" id="4.10.970.10">
    <property type="entry name" value="Ku70, bridge and pillars"/>
    <property type="match status" value="1"/>
</dbReference>
<dbReference type="Gene3D" id="1.10.720.30">
    <property type="entry name" value="SAP domain"/>
    <property type="match status" value="1"/>
</dbReference>
<dbReference type="Gene3D" id="3.40.50.410">
    <property type="entry name" value="von Willebrand factor, type A domain"/>
    <property type="match status" value="1"/>
</dbReference>
<dbReference type="IDEAL" id="IID00023"/>
<dbReference type="InterPro" id="IPR006165">
    <property type="entry name" value="Ku70"/>
</dbReference>
<dbReference type="InterPro" id="IPR006164">
    <property type="entry name" value="Ku70/Ku80_beta-barrel_dom"/>
</dbReference>
<dbReference type="InterPro" id="IPR027388">
    <property type="entry name" value="Ku70_bridge/pillars_dom_sf"/>
</dbReference>
<dbReference type="InterPro" id="IPR047087">
    <property type="entry name" value="KU70_core_dom"/>
</dbReference>
<dbReference type="InterPro" id="IPR005160">
    <property type="entry name" value="Ku_C"/>
</dbReference>
<dbReference type="InterPro" id="IPR005161">
    <property type="entry name" value="Ku_N"/>
</dbReference>
<dbReference type="InterPro" id="IPR003034">
    <property type="entry name" value="SAP_dom"/>
</dbReference>
<dbReference type="InterPro" id="IPR036361">
    <property type="entry name" value="SAP_dom_sf"/>
</dbReference>
<dbReference type="InterPro" id="IPR016194">
    <property type="entry name" value="SPOC-like_C_dom_sf"/>
</dbReference>
<dbReference type="InterPro" id="IPR036465">
    <property type="entry name" value="vWFA_dom_sf"/>
</dbReference>
<dbReference type="NCBIfam" id="TIGR00578">
    <property type="entry name" value="ku70"/>
    <property type="match status" value="1"/>
</dbReference>
<dbReference type="PANTHER" id="PTHR12604">
    <property type="entry name" value="KU AUTOANTIGEN DNA HELICASE"/>
    <property type="match status" value="1"/>
</dbReference>
<dbReference type="PANTHER" id="PTHR12604:SF5">
    <property type="entry name" value="X-RAY REPAIR CROSS-COMPLEMENTING PROTEIN 6"/>
    <property type="match status" value="1"/>
</dbReference>
<dbReference type="Pfam" id="PF02735">
    <property type="entry name" value="Ku"/>
    <property type="match status" value="1"/>
</dbReference>
<dbReference type="Pfam" id="PF03730">
    <property type="entry name" value="Ku_C"/>
    <property type="match status" value="1"/>
</dbReference>
<dbReference type="Pfam" id="PF03731">
    <property type="entry name" value="Ku_N"/>
    <property type="match status" value="1"/>
</dbReference>
<dbReference type="Pfam" id="PF02037">
    <property type="entry name" value="SAP"/>
    <property type="match status" value="1"/>
</dbReference>
<dbReference type="PIRSF" id="PIRSF003033">
    <property type="entry name" value="Ku70"/>
    <property type="match status" value="1"/>
</dbReference>
<dbReference type="SMART" id="SM00559">
    <property type="entry name" value="Ku78"/>
    <property type="match status" value="1"/>
</dbReference>
<dbReference type="SMART" id="SM00513">
    <property type="entry name" value="SAP"/>
    <property type="match status" value="1"/>
</dbReference>
<dbReference type="SUPFAM" id="SSF68906">
    <property type="entry name" value="SAP domain"/>
    <property type="match status" value="1"/>
</dbReference>
<dbReference type="SUPFAM" id="SSF100939">
    <property type="entry name" value="SPOC domain-like"/>
    <property type="match status" value="1"/>
</dbReference>
<dbReference type="SUPFAM" id="SSF53300">
    <property type="entry name" value="vWA-like"/>
    <property type="match status" value="1"/>
</dbReference>
<dbReference type="PROSITE" id="PS50800">
    <property type="entry name" value="SAP"/>
    <property type="match status" value="1"/>
</dbReference>
<name>XRCC6_HUMAN</name>
<proteinExistence type="evidence at protein level"/>
<protein>
    <recommendedName>
        <fullName>X-ray repair cross-complementing protein 6</fullName>
        <ecNumber>3.6.4.-</ecNumber>
        <ecNumber>4.2.99.-</ecNumber>
    </recommendedName>
    <alternativeName>
        <fullName>5'-deoxyribose-5-phosphate lyase Ku70</fullName>
        <shortName>5'-dRP lyase Ku70</shortName>
    </alternativeName>
    <alternativeName>
        <fullName>70 kDa subunit of Ku antigen</fullName>
    </alternativeName>
    <alternativeName>
        <fullName>ATP-dependent DNA helicase 2 subunit 1</fullName>
    </alternativeName>
    <alternativeName>
        <fullName>ATP-dependent DNA helicase II 70 kDa subunit</fullName>
    </alternativeName>
    <alternativeName>
        <fullName>CTC box-binding factor 75 kDa subunit</fullName>
        <shortName>CTC75</shortName>
        <shortName>CTCBF</shortName>
    </alternativeName>
    <alternativeName>
        <fullName>DNA repair protein XRCC6</fullName>
    </alternativeName>
    <alternativeName>
        <fullName>Lupus Ku autoantigen protein p70</fullName>
        <shortName>Ku70</shortName>
    </alternativeName>
    <alternativeName>
        <fullName>Thyroid-lupus autoantigen</fullName>
        <shortName>TLAA</shortName>
    </alternativeName>
    <alternativeName>
        <fullName>X-ray repair complementing defective repair in Chinese hamster cells 6</fullName>
    </alternativeName>
</protein>
<feature type="initiator methionine" description="Removed" evidence="51 56">
    <location>
        <position position="1"/>
    </location>
</feature>
<feature type="chain" id="PRO_0000210179" description="X-ray repair cross-complementing protein 6">
    <location>
        <begin position="2"/>
        <end position="609"/>
    </location>
</feature>
<feature type="domain" description="Ku">
    <location>
        <begin position="261"/>
        <end position="468"/>
    </location>
</feature>
<feature type="domain" description="SAP" evidence="2">
    <location>
        <begin position="573"/>
        <end position="607"/>
    </location>
</feature>
<feature type="region of interest" description="Disordered" evidence="3">
    <location>
        <begin position="1"/>
        <end position="28"/>
    </location>
</feature>
<feature type="region of interest" description="DNA-binding" evidence="45">
    <location>
        <begin position="277"/>
        <end position="341"/>
    </location>
</feature>
<feature type="region of interest" description="Interaction with XRCC5" evidence="45">
    <location>
        <begin position="373"/>
        <end position="482"/>
    </location>
</feature>
<feature type="region of interest" description="Disordered" evidence="3">
    <location>
        <begin position="536"/>
        <end position="562"/>
    </location>
</feature>
<feature type="region of interest" description="Interaction with DEAF1" evidence="15">
    <location>
        <begin position="550"/>
        <end position="609"/>
    </location>
</feature>
<feature type="region of interest" description="Interaction with BAX" evidence="45">
    <location>
        <begin position="578"/>
        <end position="583"/>
    </location>
</feature>
<feature type="compositionally biased region" description="Acidic residues" evidence="3">
    <location>
        <begin position="12"/>
        <end position="24"/>
    </location>
</feature>
<feature type="active site" description="Schiff-base intermediate with DNA; for 5'-deoxyribose-5-phosphate lyase activity" evidence="44">
    <location>
        <position position="31"/>
    </location>
</feature>
<feature type="modified residue" description="N-acetylserine" evidence="51 56">
    <location>
        <position position="2"/>
    </location>
</feature>
<feature type="modified residue" description="Phosphoserine" evidence="57">
    <location>
        <position position="2"/>
    </location>
</feature>
<feature type="modified residue" description="Phosphoserine; by PRKDC" evidence="4">
    <location>
        <position position="6"/>
    </location>
</feature>
<feature type="modified residue" description="Phosphoserine" evidence="57">
    <location>
        <position position="27"/>
    </location>
</feature>
<feature type="modified residue" description="N6-acetyllysine" evidence="52">
    <location>
        <position position="31"/>
    </location>
</feature>
<feature type="modified residue" description="Phosphoserine; by PRKDC" evidence="41">
    <location>
        <position position="51"/>
    </location>
</feature>
<feature type="modified residue" description="Phosphoserine" evidence="57">
    <location>
        <position position="306"/>
    </location>
</feature>
<feature type="modified residue" description="N6-acetyllysine" evidence="10">
    <location>
        <position position="317"/>
    </location>
</feature>
<feature type="modified residue" description="N6-acetyllysine" evidence="10 52">
    <location>
        <position position="331"/>
    </location>
</feature>
<feature type="modified residue" description="N6-acetyllysine" evidence="10 52">
    <location>
        <position position="338"/>
    </location>
</feature>
<feature type="modified residue" description="Phosphothreonine" evidence="54 55 57">
    <location>
        <position position="455"/>
    </location>
</feature>
<feature type="modified residue" description="N6-acetyllysine" evidence="52">
    <location>
        <position position="461"/>
    </location>
</feature>
<feature type="modified residue" description="Phosphoserine" evidence="50 57">
    <location>
        <position position="477"/>
    </location>
</feature>
<feature type="modified residue" description="Phosphoserine" evidence="53 57">
    <location>
        <position position="520"/>
    </location>
</feature>
<feature type="modified residue" description="N6-acetyllysine" evidence="10">
    <location>
        <position position="539"/>
    </location>
</feature>
<feature type="modified residue" description="N6-acetyllysine" evidence="10">
    <location>
        <position position="542"/>
    </location>
</feature>
<feature type="modified residue" description="N6-acetyllysine" evidence="10">
    <location>
        <position position="544"/>
    </location>
</feature>
<feature type="modified residue" description="Phosphoserine" evidence="54">
    <location>
        <position position="550"/>
    </location>
</feature>
<feature type="modified residue" description="N6-acetyllysine" evidence="10">
    <location>
        <position position="553"/>
    </location>
</feature>
<feature type="modified residue" description="N6-acetyllysine" evidence="10">
    <location>
        <position position="556"/>
    </location>
</feature>
<feature type="modified residue" description="Phosphoserine" evidence="57">
    <location>
        <position position="560"/>
    </location>
</feature>
<feature type="modified residue" description="N6,N6,N6-trimethyllysine" evidence="37">
    <location>
        <position position="570"/>
    </location>
</feature>
<feature type="cross-link" description="Glycyl lysine isopeptide (Lys-Gly) (interchain with G-Cter in SUMO2)" evidence="59">
    <location>
        <position position="287"/>
    </location>
</feature>
<feature type="cross-link" description="Glycyl lysine isopeptide (Lys-Gly) (interchain with G-Cter in SUMO2)" evidence="59">
    <location>
        <position position="317"/>
    </location>
</feature>
<feature type="cross-link" description="Glycyl lysine isopeptide (Lys-Gly) (interchain with G-Cter in SUMO2)" evidence="58 59">
    <location>
        <position position="556"/>
    </location>
</feature>
<feature type="splice variant" id="VSP_056030" description="In isoform 2." evidence="43">
    <location>
        <begin position="65"/>
        <end position="105"/>
    </location>
</feature>
<feature type="mutagenesis site" description="Diminishes the ability to form a Schiff base. Abolishes adduct formation; when associated with A-160 and A-164." evidence="13">
    <original>K</original>
    <variation>A</variation>
    <location>
        <position position="31"/>
    </location>
</feature>
<feature type="mutagenesis site" description="Abolishes adduct formation; when associated with A-31 and A-160." evidence="13">
    <original>K</original>
    <variation>A</variation>
    <location>
        <position position="160"/>
    </location>
</feature>
<feature type="mutagenesis site" description="Abolishes adduct formation; when associated with A-31 and A-164." evidence="13">
    <original>K</original>
    <variation>A</variation>
    <location>
        <position position="164"/>
    </location>
</feature>
<feature type="mutagenesis site" description="Complete loss of suppression of BAX-induced apoptosis." evidence="10">
    <original>K</original>
    <variation>Q</variation>
    <location>
        <position position="539"/>
    </location>
</feature>
<feature type="mutagenesis site" description="No effect on suppression of BAX-induced apoptosis." evidence="10">
    <original>K</original>
    <variation>R</variation>
    <location>
        <position position="539"/>
    </location>
</feature>
<feature type="mutagenesis site" description="Complete loss of suppression of BAX-induced apoptosis." evidence="10">
    <original>K</original>
    <variation>Q</variation>
    <location>
        <position position="542"/>
    </location>
</feature>
<feature type="mutagenesis site" description="No effect on suppression of BAX-induced apoptosis." evidence="10">
    <original>K</original>
    <variation>R</variation>
    <location>
        <position position="542"/>
    </location>
</feature>
<feature type="mutagenesis site" description="No effect on suppression of BAX-induced apoptosis." evidence="10">
    <original>K</original>
    <variation>R</variation>
    <location>
        <position position="544"/>
    </location>
</feature>
<feature type="mutagenesis site" description="Partial loss of suppression of BAX-induced apoptosis." evidence="10">
    <original>K</original>
    <variation>Q</variation>
    <location>
        <position position="553"/>
    </location>
</feature>
<feature type="mutagenesis site" description="No effect on suppression of BAX-induced apoptosis." evidence="10">
    <original>K</original>
    <variation>R</variation>
    <location>
        <position position="553"/>
    </location>
</feature>
<feature type="mutagenesis site" description="No effect on suppression of BAX-induced apoptosis." evidence="10">
    <original>K</original>
    <variation>R</variation>
    <location>
        <position position="556"/>
    </location>
</feature>
<feature type="mutagenesis site" description="Loss of methylation; loss of anti-apoptotic activity; no effect on XRCC5 stabilization." evidence="37">
    <original>K</original>
    <variation>R</variation>
    <location>
        <position position="570"/>
    </location>
</feature>
<feature type="sequence conflict" description="In Ref. 10; AA sequence." evidence="44" ref="10">
    <original>Q</original>
    <variation>D</variation>
    <location>
        <position position="20"/>
    </location>
</feature>
<feature type="sequence conflict" description="In Ref. 11; AA sequence." evidence="44" ref="11">
    <original>N</original>
    <variation>K</variation>
    <location>
        <position position="101"/>
    </location>
</feature>
<feature type="sequence conflict" description="In Ref. 11; AA sequence." evidence="44" ref="11">
    <original>Y</original>
    <variation>L</variation>
    <location>
        <position position="103"/>
    </location>
</feature>
<feature type="sequence conflict" description="In Ref. 11; AA sequence." evidence="44" ref="11">
    <original>I</original>
    <variation>S</variation>
    <location>
        <position position="116"/>
    </location>
</feature>
<feature type="sequence conflict" description="In Ref. 11; AA sequence." evidence="44" ref="11">
    <original>Q</original>
    <variation>S</variation>
    <location>
        <position position="125"/>
    </location>
</feature>
<feature type="sequence conflict" description="In Ref. 5; CAG47015." evidence="44" ref="5">
    <original>A</original>
    <variation>T</variation>
    <location>
        <position position="181"/>
    </location>
</feature>
<feature type="strand" evidence="67">
    <location>
        <begin position="37"/>
        <end position="43"/>
    </location>
</feature>
<feature type="helix" evidence="67">
    <location>
        <begin position="46"/>
        <end position="49"/>
    </location>
</feature>
<feature type="strand" evidence="61">
    <location>
        <begin position="53"/>
        <end position="56"/>
    </location>
</feature>
<feature type="helix" evidence="67">
    <location>
        <begin position="59"/>
        <end position="77"/>
    </location>
</feature>
<feature type="strand" evidence="67">
    <location>
        <begin position="82"/>
        <end position="91"/>
    </location>
</feature>
<feature type="strand" evidence="66">
    <location>
        <begin position="94"/>
        <end position="97"/>
    </location>
</feature>
<feature type="strand" evidence="67">
    <location>
        <begin position="100"/>
        <end position="109"/>
    </location>
</feature>
<feature type="helix" evidence="67">
    <location>
        <begin position="113"/>
        <end position="121"/>
    </location>
</feature>
<feature type="helix" evidence="67">
    <location>
        <begin position="124"/>
        <end position="134"/>
    </location>
</feature>
<feature type="helix" evidence="67">
    <location>
        <begin position="143"/>
        <end position="155"/>
    </location>
</feature>
<feature type="strand" evidence="67">
    <location>
        <begin position="164"/>
        <end position="169"/>
    </location>
</feature>
<feature type="turn" evidence="67">
    <location>
        <begin position="175"/>
        <end position="178"/>
    </location>
</feature>
<feature type="helix" evidence="67">
    <location>
        <begin position="180"/>
        <end position="196"/>
    </location>
</feature>
<feature type="strand" evidence="67">
    <location>
        <begin position="198"/>
        <end position="202"/>
    </location>
</feature>
<feature type="strand" evidence="63">
    <location>
        <begin position="207"/>
        <end position="210"/>
    </location>
</feature>
<feature type="turn" evidence="67">
    <location>
        <begin position="213"/>
        <end position="216"/>
    </location>
</feature>
<feature type="strand" evidence="67">
    <location>
        <begin position="218"/>
        <end position="221"/>
    </location>
</feature>
<feature type="turn" evidence="67">
    <location>
        <begin position="225"/>
        <end position="228"/>
    </location>
</feature>
<feature type="strand" evidence="62">
    <location>
        <begin position="232"/>
        <end position="234"/>
    </location>
</feature>
<feature type="helix" evidence="67">
    <location>
        <begin position="239"/>
        <end position="250"/>
    </location>
</feature>
<feature type="strand" evidence="67">
    <location>
        <begin position="260"/>
        <end position="266"/>
    </location>
</feature>
<feature type="strand" evidence="67">
    <location>
        <begin position="268"/>
        <end position="274"/>
    </location>
</feature>
<feature type="strand" evidence="61">
    <location>
        <begin position="286"/>
        <end position="289"/>
    </location>
</feature>
<feature type="strand" evidence="67">
    <location>
        <begin position="290"/>
        <end position="292"/>
    </location>
</feature>
<feature type="strand" evidence="64">
    <location>
        <begin position="295"/>
        <end position="297"/>
    </location>
</feature>
<feature type="strand" evidence="67">
    <location>
        <begin position="300"/>
        <end position="304"/>
    </location>
</feature>
<feature type="turn" evidence="67">
    <location>
        <begin position="305"/>
        <end position="307"/>
    </location>
</feature>
<feature type="strand" evidence="64">
    <location>
        <begin position="308"/>
        <end position="310"/>
    </location>
</feature>
<feature type="strand" evidence="67">
    <location>
        <begin position="315"/>
        <end position="322"/>
    </location>
</feature>
<feature type="strand" evidence="67">
    <location>
        <begin position="325"/>
        <end position="329"/>
    </location>
</feature>
<feature type="helix" evidence="67">
    <location>
        <begin position="331"/>
        <end position="336"/>
    </location>
</feature>
<feature type="strand" evidence="67">
    <location>
        <begin position="343"/>
        <end position="352"/>
    </location>
</feature>
<feature type="helix" evidence="67">
    <location>
        <begin position="353"/>
        <end position="355"/>
    </location>
</feature>
<feature type="helix" evidence="61">
    <location>
        <begin position="358"/>
        <end position="360"/>
    </location>
</feature>
<feature type="strand" evidence="67">
    <location>
        <begin position="366"/>
        <end position="370"/>
    </location>
</feature>
<feature type="turn" evidence="67">
    <location>
        <begin position="372"/>
        <end position="374"/>
    </location>
</feature>
<feature type="helix" evidence="67">
    <location>
        <begin position="378"/>
        <end position="392"/>
    </location>
</feature>
<feature type="strand" evidence="67">
    <location>
        <begin position="394"/>
        <end position="401"/>
    </location>
</feature>
<feature type="strand" evidence="61">
    <location>
        <begin position="403"/>
        <end position="405"/>
    </location>
</feature>
<feature type="strand" evidence="67">
    <location>
        <begin position="409"/>
        <end position="416"/>
    </location>
</feature>
<feature type="turn" evidence="62">
    <location>
        <begin position="422"/>
        <end position="424"/>
    </location>
</feature>
<feature type="strand" evidence="67">
    <location>
        <begin position="426"/>
        <end position="428"/>
    </location>
</feature>
<feature type="strand" evidence="67">
    <location>
        <begin position="430"/>
        <end position="436"/>
    </location>
</feature>
<feature type="helix" evidence="67">
    <location>
        <begin position="440"/>
        <end position="442"/>
    </location>
</feature>
<feature type="helix" evidence="67">
    <location>
        <begin position="456"/>
        <end position="468"/>
    </location>
</feature>
<feature type="helix" evidence="67">
    <location>
        <begin position="481"/>
        <end position="494"/>
    </location>
</feature>
<feature type="strand" evidence="65">
    <location>
        <begin position="506"/>
        <end position="508"/>
    </location>
</feature>
<feature type="helix" evidence="67">
    <location>
        <begin position="511"/>
        <end position="518"/>
    </location>
</feature>
<feature type="helix" evidence="67">
    <location>
        <begin position="521"/>
        <end position="529"/>
    </location>
</feature>
<feature type="helix" evidence="60">
    <location>
        <begin position="561"/>
        <end position="569"/>
    </location>
</feature>
<feature type="helix" evidence="60">
    <location>
        <begin position="573"/>
        <end position="575"/>
    </location>
</feature>
<feature type="helix" evidence="60">
    <location>
        <begin position="578"/>
        <end position="587"/>
    </location>
</feature>
<feature type="helix" evidence="60">
    <location>
        <begin position="596"/>
        <end position="607"/>
    </location>
</feature>
<accession>P12956</accession>
<accession>B1AHC8</accession>
<accession>Q6FG89</accession>
<accession>Q9UCQ2</accession>
<accession>Q9UCQ3</accession>